<proteinExistence type="evidence at protein level"/>
<keyword id="KW-0002">3D-structure</keyword>
<keyword id="KW-0007">Acetylation</keyword>
<keyword id="KW-0025">Alternative splicing</keyword>
<keyword id="KW-0053">Apoptosis</keyword>
<keyword id="KW-0131">Cell cycle</keyword>
<keyword id="KW-0132">Cell division</keyword>
<keyword id="KW-0137">Centromere</keyword>
<keyword id="KW-0158">Chromosome</keyword>
<keyword id="KW-0159">Chromosome partition</keyword>
<keyword id="KW-0963">Cytoplasm</keyword>
<keyword id="KW-0206">Cytoskeleton</keyword>
<keyword id="KW-0945">Host-virus interaction</keyword>
<keyword id="KW-0995">Kinetochore</keyword>
<keyword id="KW-0479">Metal-binding</keyword>
<keyword id="KW-0493">Microtubule</keyword>
<keyword id="KW-0498">Mitosis</keyword>
<keyword id="KW-0539">Nucleus</keyword>
<keyword id="KW-0597">Phosphoprotein</keyword>
<keyword id="KW-0646">Protease inhibitor</keyword>
<keyword id="KW-1267">Proteomics identification</keyword>
<keyword id="KW-1185">Reference proteome</keyword>
<keyword id="KW-0678">Repressor</keyword>
<keyword id="KW-0789">Thiol protease inhibitor</keyword>
<keyword id="KW-0804">Transcription</keyword>
<keyword id="KW-0805">Transcription regulation</keyword>
<keyword id="KW-0832">Ubl conjugation</keyword>
<keyword id="KW-0862">Zinc</keyword>
<name>BIRC5_HUMAN</name>
<evidence type="ECO:0000250" key="1">
    <source>
        <dbReference type="UniProtKB" id="E3SCZ8"/>
    </source>
</evidence>
<evidence type="ECO:0000269" key="2">
    <source>
    </source>
</evidence>
<evidence type="ECO:0000269" key="3">
    <source>
    </source>
</evidence>
<evidence type="ECO:0000269" key="4">
    <source>
    </source>
</evidence>
<evidence type="ECO:0000269" key="5">
    <source>
    </source>
</evidence>
<evidence type="ECO:0000269" key="6">
    <source>
    </source>
</evidence>
<evidence type="ECO:0000269" key="7">
    <source>
    </source>
</evidence>
<evidence type="ECO:0000269" key="8">
    <source>
    </source>
</evidence>
<evidence type="ECO:0000269" key="9">
    <source>
    </source>
</evidence>
<evidence type="ECO:0000269" key="10">
    <source>
    </source>
</evidence>
<evidence type="ECO:0000269" key="11">
    <source>
    </source>
</evidence>
<evidence type="ECO:0000269" key="12">
    <source>
    </source>
</evidence>
<evidence type="ECO:0000269" key="13">
    <source>
    </source>
</evidence>
<evidence type="ECO:0000269" key="14">
    <source>
    </source>
</evidence>
<evidence type="ECO:0000269" key="15">
    <source>
    </source>
</evidence>
<evidence type="ECO:0000269" key="16">
    <source>
    </source>
</evidence>
<evidence type="ECO:0000269" key="17">
    <source>
    </source>
</evidence>
<evidence type="ECO:0000269" key="18">
    <source>
    </source>
</evidence>
<evidence type="ECO:0000269" key="19">
    <source>
    </source>
</evidence>
<evidence type="ECO:0000269" key="20">
    <source>
    </source>
</evidence>
<evidence type="ECO:0000269" key="21">
    <source>
    </source>
</evidence>
<evidence type="ECO:0000269" key="22">
    <source>
    </source>
</evidence>
<evidence type="ECO:0000269" key="23">
    <source>
    </source>
</evidence>
<evidence type="ECO:0000269" key="24">
    <source>
    </source>
</evidence>
<evidence type="ECO:0000269" key="25">
    <source>
    </source>
</evidence>
<evidence type="ECO:0000269" key="26">
    <source>
    </source>
</evidence>
<evidence type="ECO:0000269" key="27">
    <source>
    </source>
</evidence>
<evidence type="ECO:0000269" key="28">
    <source>
    </source>
</evidence>
<evidence type="ECO:0000269" key="29">
    <source>
    </source>
</evidence>
<evidence type="ECO:0000269" key="30">
    <source>
    </source>
</evidence>
<evidence type="ECO:0000269" key="31">
    <source>
    </source>
</evidence>
<evidence type="ECO:0000269" key="32">
    <source>
    </source>
</evidence>
<evidence type="ECO:0000269" key="33">
    <source>
    </source>
</evidence>
<evidence type="ECO:0000269" key="34">
    <source>
    </source>
</evidence>
<evidence type="ECO:0000269" key="35">
    <source>
    </source>
</evidence>
<evidence type="ECO:0000269" key="36">
    <source>
    </source>
</evidence>
<evidence type="ECO:0000269" key="37">
    <source>
    </source>
</evidence>
<evidence type="ECO:0000303" key="38">
    <source>
    </source>
</evidence>
<evidence type="ECO:0000303" key="39">
    <source>
    </source>
</evidence>
<evidence type="ECO:0000303" key="40">
    <source>
    </source>
</evidence>
<evidence type="ECO:0000303" key="41">
    <source ref="6"/>
</evidence>
<evidence type="ECO:0000303" key="42">
    <source ref="7"/>
</evidence>
<evidence type="ECO:0000303" key="43">
    <source ref="8"/>
</evidence>
<evidence type="ECO:0000305" key="44"/>
<evidence type="ECO:0007744" key="45">
    <source>
        <dbReference type="PDB" id="2QFA"/>
    </source>
</evidence>
<evidence type="ECO:0007744" key="46">
    <source>
    </source>
</evidence>
<evidence type="ECO:0007829" key="47">
    <source>
        <dbReference type="PDB" id="1F3H"/>
    </source>
</evidence>
<evidence type="ECO:0007829" key="48">
    <source>
        <dbReference type="PDB" id="2QFA"/>
    </source>
</evidence>
<evidence type="ECO:0007829" key="49">
    <source>
        <dbReference type="PDB" id="3UIG"/>
    </source>
</evidence>
<evidence type="ECO:0007829" key="50">
    <source>
        <dbReference type="PDB" id="6YIF"/>
    </source>
</evidence>
<dbReference type="EMBL" id="U75285">
    <property type="protein sequence ID" value="AAC51660.1"/>
    <property type="molecule type" value="Genomic_DNA"/>
</dbReference>
<dbReference type="EMBL" id="AF077350">
    <property type="protein sequence ID" value="AAD34226.1"/>
    <property type="molecule type" value="mRNA"/>
</dbReference>
<dbReference type="EMBL" id="AB154416">
    <property type="protein sequence ID" value="BAD11155.1"/>
    <property type="molecule type" value="mRNA"/>
</dbReference>
<dbReference type="EMBL" id="AY830084">
    <property type="protein sequence ID" value="AAW22624.1"/>
    <property type="molecule type" value="mRNA"/>
</dbReference>
<dbReference type="EMBL" id="AB028869">
    <property type="protein sequence ID" value="BAA93676.1"/>
    <property type="molecule type" value="mRNA"/>
</dbReference>
<dbReference type="EMBL" id="AY927772">
    <property type="protein sequence ID" value="AAY15202.1"/>
    <property type="molecule type" value="mRNA"/>
</dbReference>
<dbReference type="EMBL" id="DQ227257">
    <property type="protein sequence ID" value="ABB76601.1"/>
    <property type="molecule type" value="mRNA"/>
</dbReference>
<dbReference type="EMBL" id="DQ310375">
    <property type="protein sequence ID" value="ABC42341.1"/>
    <property type="molecule type" value="mRNA"/>
</dbReference>
<dbReference type="EMBL" id="DQ310376">
    <property type="protein sequence ID" value="ABC42342.1"/>
    <property type="molecule type" value="mRNA"/>
</dbReference>
<dbReference type="EMBL" id="DQ310377">
    <property type="protein sequence ID" value="ABC42343.1"/>
    <property type="molecule type" value="mRNA"/>
</dbReference>
<dbReference type="EMBL" id="DQ310378">
    <property type="protein sequence ID" value="ABC42344.1"/>
    <property type="molecule type" value="mRNA"/>
</dbReference>
<dbReference type="EMBL" id="DQ310379">
    <property type="protein sequence ID" value="ABC42345.1"/>
    <property type="molecule type" value="mRNA"/>
</dbReference>
<dbReference type="EMBL" id="CR541740">
    <property type="protein sequence ID" value="CAG46540.1"/>
    <property type="molecule type" value="mRNA"/>
</dbReference>
<dbReference type="EMBL" id="AK223428">
    <property type="protein sequence ID" value="BAD97148.1"/>
    <property type="molecule type" value="mRNA"/>
</dbReference>
<dbReference type="EMBL" id="AK311917">
    <property type="protein sequence ID" value="BAG34858.1"/>
    <property type="molecule type" value="mRNA"/>
</dbReference>
<dbReference type="EMBL" id="AY795969">
    <property type="protein sequence ID" value="AAV40840.1"/>
    <property type="molecule type" value="Genomic_DNA"/>
</dbReference>
<dbReference type="EMBL" id="AC087645">
    <property type="status" value="NOT_ANNOTATED_CDS"/>
    <property type="molecule type" value="Genomic_DNA"/>
</dbReference>
<dbReference type="EMBL" id="CH471099">
    <property type="protein sequence ID" value="EAW89514.1"/>
    <property type="molecule type" value="Genomic_DNA"/>
</dbReference>
<dbReference type="EMBL" id="BC008718">
    <property type="protein sequence ID" value="AAH08718.1"/>
    <property type="molecule type" value="mRNA"/>
</dbReference>
<dbReference type="EMBL" id="BC034148">
    <property type="protein sequence ID" value="AAH34148.1"/>
    <property type="molecule type" value="mRNA"/>
</dbReference>
<dbReference type="EMBL" id="BC065497">
    <property type="protein sequence ID" value="AAH65497.1"/>
    <property type="molecule type" value="mRNA"/>
</dbReference>
<dbReference type="CCDS" id="CCDS11755.1">
    <molecule id="O15392-1"/>
</dbReference>
<dbReference type="CCDS" id="CCDS32751.1">
    <molecule id="O15392-3"/>
</dbReference>
<dbReference type="CCDS" id="CCDS32752.1">
    <molecule id="O15392-2"/>
</dbReference>
<dbReference type="RefSeq" id="NP_001012270.1">
    <molecule id="O15392-3"/>
    <property type="nucleotide sequence ID" value="NM_001012270.2"/>
</dbReference>
<dbReference type="RefSeq" id="NP_001012271.1">
    <property type="nucleotide sequence ID" value="NM_001012271.1"/>
</dbReference>
<dbReference type="RefSeq" id="NP_001159.2">
    <property type="nucleotide sequence ID" value="NM_001168.2"/>
</dbReference>
<dbReference type="PDB" id="1E31">
    <property type="method" value="X-ray"/>
    <property type="resolution" value="2.71 A"/>
    <property type="chains" value="A/B=1-142"/>
</dbReference>
<dbReference type="PDB" id="1F3H">
    <property type="method" value="X-ray"/>
    <property type="resolution" value="2.58 A"/>
    <property type="chains" value="A/B=1-142"/>
</dbReference>
<dbReference type="PDB" id="1XOX">
    <property type="method" value="NMR"/>
    <property type="chains" value="A/B=1-117"/>
</dbReference>
<dbReference type="PDB" id="2QFA">
    <property type="method" value="X-ray"/>
    <property type="resolution" value="1.40 A"/>
    <property type="chains" value="A=1-142"/>
</dbReference>
<dbReference type="PDB" id="2RAW">
    <property type="method" value="X-ray"/>
    <property type="resolution" value="2.40 A"/>
    <property type="chains" value="A=1-142"/>
</dbReference>
<dbReference type="PDB" id="2RAX">
    <property type="method" value="X-ray"/>
    <property type="resolution" value="3.30 A"/>
    <property type="chains" value="A/E/X=1-120"/>
</dbReference>
<dbReference type="PDB" id="3UEC">
    <property type="method" value="X-ray"/>
    <property type="resolution" value="2.18 A"/>
    <property type="chains" value="A=1-142"/>
</dbReference>
<dbReference type="PDB" id="3UED">
    <property type="method" value="X-ray"/>
    <property type="resolution" value="2.70 A"/>
    <property type="chains" value="A/C=1-142"/>
</dbReference>
<dbReference type="PDB" id="3UEE">
    <property type="method" value="X-ray"/>
    <property type="resolution" value="2.61 A"/>
    <property type="chains" value="A/C=1-142"/>
</dbReference>
<dbReference type="PDB" id="3UEF">
    <property type="method" value="X-ray"/>
    <property type="resolution" value="2.45 A"/>
    <property type="chains" value="A/C=1-142"/>
</dbReference>
<dbReference type="PDB" id="3UEG">
    <property type="method" value="X-ray"/>
    <property type="resolution" value="2.80 A"/>
    <property type="chains" value="A/B=1-142"/>
</dbReference>
<dbReference type="PDB" id="3UEH">
    <property type="method" value="X-ray"/>
    <property type="resolution" value="2.60 A"/>
    <property type="chains" value="A/B=1-142"/>
</dbReference>
<dbReference type="PDB" id="3UEI">
    <property type="method" value="X-ray"/>
    <property type="resolution" value="2.70 A"/>
    <property type="chains" value="A/B=1-142"/>
</dbReference>
<dbReference type="PDB" id="3UIG">
    <property type="method" value="X-ray"/>
    <property type="resolution" value="2.40 A"/>
    <property type="chains" value="A/B=1-142"/>
</dbReference>
<dbReference type="PDB" id="3UIH">
    <property type="method" value="X-ray"/>
    <property type="resolution" value="2.40 A"/>
    <property type="chains" value="A/B=1-142"/>
</dbReference>
<dbReference type="PDB" id="3UII">
    <property type="method" value="X-ray"/>
    <property type="resolution" value="2.60 A"/>
    <property type="chains" value="A/B=1-142"/>
</dbReference>
<dbReference type="PDB" id="3UIJ">
    <property type="method" value="X-ray"/>
    <property type="resolution" value="2.70 A"/>
    <property type="chains" value="A/B=1-142"/>
</dbReference>
<dbReference type="PDB" id="3UIK">
    <property type="method" value="X-ray"/>
    <property type="resolution" value="2.70 A"/>
    <property type="chains" value="A/B=1-142"/>
</dbReference>
<dbReference type="PDB" id="4A0I">
    <property type="method" value="X-ray"/>
    <property type="resolution" value="2.60 A"/>
    <property type="chains" value="A/B=1-142"/>
</dbReference>
<dbReference type="PDB" id="4A0J">
    <property type="method" value="X-ray"/>
    <property type="resolution" value="2.80 A"/>
    <property type="chains" value="A/B=1-142"/>
</dbReference>
<dbReference type="PDB" id="4A0N">
    <property type="method" value="X-ray"/>
    <property type="resolution" value="2.74 A"/>
    <property type="chains" value="A=1-142"/>
</dbReference>
<dbReference type="PDB" id="6SHO">
    <property type="method" value="X-ray"/>
    <property type="resolution" value="3.20 A"/>
    <property type="chains" value="A/B=1-142"/>
</dbReference>
<dbReference type="PDB" id="6YIE">
    <property type="method" value="X-ray"/>
    <property type="resolution" value="3.49 A"/>
    <property type="chains" value="A/D=1-142"/>
</dbReference>
<dbReference type="PDB" id="6YIF">
    <property type="method" value="X-ray"/>
    <property type="resolution" value="1.81 A"/>
    <property type="chains" value="A=1-142"/>
</dbReference>
<dbReference type="PDB" id="6YIH">
    <property type="method" value="X-ray"/>
    <property type="resolution" value="2.55 A"/>
    <property type="chains" value="A=1-142"/>
</dbReference>
<dbReference type="PDB" id="7LBK">
    <property type="method" value="X-ray"/>
    <property type="resolution" value="2.70 A"/>
    <property type="chains" value="A/B=1-142"/>
</dbReference>
<dbReference type="PDB" id="7LBO">
    <property type="method" value="X-ray"/>
    <property type="resolution" value="2.50 A"/>
    <property type="chains" value="A/B=1-142"/>
</dbReference>
<dbReference type="PDB" id="7LBP">
    <property type="method" value="X-ray"/>
    <property type="resolution" value="2.60 A"/>
    <property type="chains" value="A/C=1-142"/>
</dbReference>
<dbReference type="PDB" id="7LBQ">
    <property type="method" value="X-ray"/>
    <property type="resolution" value="2.69 A"/>
    <property type="chains" value="A=1-142"/>
</dbReference>
<dbReference type="PDB" id="8RUP">
    <property type="method" value="EM"/>
    <property type="resolution" value="2.42 A"/>
    <property type="chains" value="K=1-142"/>
</dbReference>
<dbReference type="PDBsum" id="1E31"/>
<dbReference type="PDBsum" id="1F3H"/>
<dbReference type="PDBsum" id="1XOX"/>
<dbReference type="PDBsum" id="2QFA"/>
<dbReference type="PDBsum" id="2RAW"/>
<dbReference type="PDBsum" id="2RAX"/>
<dbReference type="PDBsum" id="3UEC"/>
<dbReference type="PDBsum" id="3UED"/>
<dbReference type="PDBsum" id="3UEE"/>
<dbReference type="PDBsum" id="3UEF"/>
<dbReference type="PDBsum" id="3UEG"/>
<dbReference type="PDBsum" id="3UEH"/>
<dbReference type="PDBsum" id="3UEI"/>
<dbReference type="PDBsum" id="3UIG"/>
<dbReference type="PDBsum" id="3UIH"/>
<dbReference type="PDBsum" id="3UII"/>
<dbReference type="PDBsum" id="3UIJ"/>
<dbReference type="PDBsum" id="3UIK"/>
<dbReference type="PDBsum" id="4A0I"/>
<dbReference type="PDBsum" id="4A0J"/>
<dbReference type="PDBsum" id="4A0N"/>
<dbReference type="PDBsum" id="6SHO"/>
<dbReference type="PDBsum" id="6YIE"/>
<dbReference type="PDBsum" id="6YIF"/>
<dbReference type="PDBsum" id="6YIH"/>
<dbReference type="PDBsum" id="7LBK"/>
<dbReference type="PDBsum" id="7LBO"/>
<dbReference type="PDBsum" id="7LBP"/>
<dbReference type="PDBsum" id="7LBQ"/>
<dbReference type="PDBsum" id="8RUP"/>
<dbReference type="BMRB" id="O15392"/>
<dbReference type="EMDB" id="EMD-19513"/>
<dbReference type="SASBDB" id="O15392"/>
<dbReference type="SMR" id="O15392"/>
<dbReference type="BioGRID" id="106829">
    <property type="interactions" value="109"/>
</dbReference>
<dbReference type="ComplexPortal" id="CPX-111">
    <property type="entry name" value="Survivin homodimer complex"/>
</dbReference>
<dbReference type="ComplexPortal" id="CPX-116">
    <property type="entry name" value="Chromosomal passenger complex"/>
</dbReference>
<dbReference type="CORUM" id="O15392"/>
<dbReference type="DIP" id="DIP-34662N"/>
<dbReference type="ELM" id="O15392"/>
<dbReference type="FunCoup" id="O15392">
    <property type="interactions" value="1567"/>
</dbReference>
<dbReference type="IntAct" id="O15392">
    <property type="interactions" value="56"/>
</dbReference>
<dbReference type="MINT" id="O15392"/>
<dbReference type="STRING" id="9606.ENSP00000301633"/>
<dbReference type="BindingDB" id="O15392"/>
<dbReference type="ChEMBL" id="CHEMBL5989"/>
<dbReference type="DrugBank" id="DB16095">
    <property type="generic name" value="APG-1387"/>
</dbReference>
<dbReference type="DrugBank" id="DB04115">
    <property type="generic name" value="Berberine"/>
</dbReference>
<dbReference type="DrugBank" id="DB12085">
    <property type="generic name" value="LCL-161"/>
</dbReference>
<dbReference type="DrugBank" id="DB05141">
    <property type="generic name" value="LY2181308"/>
</dbReference>
<dbReference type="DrugBank" id="DB00206">
    <property type="generic name" value="Reserpine"/>
</dbReference>
<dbReference type="DrugBank" id="DB16305">
    <property type="generic name" value="Xevinapant"/>
</dbReference>
<dbReference type="DrugCentral" id="O15392"/>
<dbReference type="GuidetoPHARMACOLOGY" id="2795"/>
<dbReference type="MEROPS" id="I32.005"/>
<dbReference type="iPTMnet" id="O15392"/>
<dbReference type="PhosphoSitePlus" id="O15392"/>
<dbReference type="BioMuta" id="BIRC5"/>
<dbReference type="jPOST" id="O15392"/>
<dbReference type="MassIVE" id="O15392"/>
<dbReference type="PeptideAtlas" id="O15392"/>
<dbReference type="ProteomicsDB" id="48627">
    <molecule id="O15392-1"/>
</dbReference>
<dbReference type="ProteomicsDB" id="48628">
    <molecule id="O15392-2"/>
</dbReference>
<dbReference type="ProteomicsDB" id="48629">
    <molecule id="O15392-3"/>
</dbReference>
<dbReference type="ProteomicsDB" id="48630">
    <molecule id="O15392-4"/>
</dbReference>
<dbReference type="ProteomicsDB" id="48631">
    <molecule id="O15392-5"/>
</dbReference>
<dbReference type="ProteomicsDB" id="48632">
    <molecule id="O15392-6"/>
</dbReference>
<dbReference type="ProteomicsDB" id="48633">
    <molecule id="O15392-7"/>
</dbReference>
<dbReference type="Pumba" id="O15392"/>
<dbReference type="ABCD" id="O15392">
    <property type="antibodies" value="5 sequenced antibodies"/>
</dbReference>
<dbReference type="Antibodypedia" id="1073">
    <property type="antibodies" value="1826 antibodies from 52 providers"/>
</dbReference>
<dbReference type="DNASU" id="332"/>
<dbReference type="Ensembl" id="ENST00000374948.6">
    <molecule id="O15392-3"/>
    <property type="protein sequence ID" value="ENSP00000364086.1"/>
    <property type="gene ID" value="ENSG00000089685.15"/>
</dbReference>
<dbReference type="Ensembl" id="ENST00000590449.1">
    <molecule id="O15392-7"/>
    <property type="protein sequence ID" value="ENSP00000465868.1"/>
    <property type="gene ID" value="ENSG00000089685.15"/>
</dbReference>
<dbReference type="Ensembl" id="ENST00000590925.6">
    <molecule id="O15392-4"/>
    <property type="protein sequence ID" value="ENSP00000467336.1"/>
    <property type="gene ID" value="ENSG00000089685.15"/>
</dbReference>
<dbReference type="Ensembl" id="ENST00000592734.5">
    <molecule id="O15392-6"/>
    <property type="protein sequence ID" value="ENSP00000466617.1"/>
    <property type="gene ID" value="ENSG00000089685.15"/>
</dbReference>
<dbReference type="GeneID" id="332"/>
<dbReference type="KEGG" id="hsa:332"/>
<dbReference type="UCSC" id="uc002jvh.4">
    <molecule id="O15392-1"/>
    <property type="organism name" value="human"/>
</dbReference>
<dbReference type="AGR" id="HGNC:593"/>
<dbReference type="CTD" id="332"/>
<dbReference type="DisGeNET" id="332"/>
<dbReference type="GeneCards" id="BIRC5"/>
<dbReference type="HGNC" id="HGNC:593">
    <property type="gene designation" value="BIRC5"/>
</dbReference>
<dbReference type="HPA" id="ENSG00000089685">
    <property type="expression patterns" value="Tissue enhanced (bone marrow, lymphoid tissue, testis)"/>
</dbReference>
<dbReference type="MIM" id="603352">
    <property type="type" value="gene"/>
</dbReference>
<dbReference type="neXtProt" id="NX_O15392"/>
<dbReference type="OpenTargets" id="ENSG00000089685"/>
<dbReference type="PharmGKB" id="PA25362"/>
<dbReference type="VEuPathDB" id="HostDB:ENSG00000089685"/>
<dbReference type="GeneTree" id="ENSGT00510000047537"/>
<dbReference type="HOGENOM" id="CLU_1869818_0_0_1"/>
<dbReference type="InParanoid" id="O15392"/>
<dbReference type="OrthoDB" id="2196114at2759"/>
<dbReference type="PAN-GO" id="O15392">
    <property type="GO annotations" value="6 GO annotations based on evolutionary models"/>
</dbReference>
<dbReference type="PathwayCommons" id="O15392"/>
<dbReference type="Reactome" id="R-HSA-141444">
    <property type="pathway name" value="Amplification of signal from unattached kinetochores via a MAD2 inhibitory signal"/>
</dbReference>
<dbReference type="Reactome" id="R-HSA-2467813">
    <property type="pathway name" value="Separation of Sister Chromatids"/>
</dbReference>
<dbReference type="Reactome" id="R-HSA-2500257">
    <property type="pathway name" value="Resolution of Sister Chromatid Cohesion"/>
</dbReference>
<dbReference type="Reactome" id="R-HSA-4615885">
    <property type="pathway name" value="SUMOylation of DNA replication proteins"/>
</dbReference>
<dbReference type="Reactome" id="R-HSA-5663220">
    <property type="pathway name" value="RHO GTPases Activate Formins"/>
</dbReference>
<dbReference type="Reactome" id="R-HSA-6785807">
    <property type="pathway name" value="Interleukin-4 and Interleukin-13 signaling"/>
</dbReference>
<dbReference type="Reactome" id="R-HSA-6803205">
    <property type="pathway name" value="TP53 regulates transcription of several additional cell death genes whose specific roles in p53-dependent apoptosis remain uncertain"/>
</dbReference>
<dbReference type="Reactome" id="R-HSA-68877">
    <property type="pathway name" value="Mitotic Prometaphase"/>
</dbReference>
<dbReference type="Reactome" id="R-HSA-8951664">
    <property type="pathway name" value="Neddylation"/>
</dbReference>
<dbReference type="Reactome" id="R-HSA-9648025">
    <property type="pathway name" value="EML4 and NUDC in mitotic spindle formation"/>
</dbReference>
<dbReference type="SignaLink" id="O15392"/>
<dbReference type="SIGNOR" id="O15392"/>
<dbReference type="BioGRID-ORCS" id="332">
    <property type="hits" value="826 hits in 1161 CRISPR screens"/>
</dbReference>
<dbReference type="CD-CODE" id="3F4CB227">
    <property type="entry name" value="Synthetic Condensate 000322"/>
</dbReference>
<dbReference type="CD-CODE" id="45F3D8EC">
    <property type="entry name" value="Synthetic Condensate 000342"/>
</dbReference>
<dbReference type="CD-CODE" id="7230F6EA">
    <property type="entry name" value="Synthetic Condensate 000328"/>
</dbReference>
<dbReference type="CD-CODE" id="8C2F96ED">
    <property type="entry name" value="Centrosome"/>
</dbReference>
<dbReference type="ChiTaRS" id="BIRC5">
    <property type="organism name" value="human"/>
</dbReference>
<dbReference type="EvolutionaryTrace" id="O15392"/>
<dbReference type="GeneWiki" id="Survivin"/>
<dbReference type="GenomeRNAi" id="332"/>
<dbReference type="Pharos" id="O15392">
    <property type="development level" value="Tchem"/>
</dbReference>
<dbReference type="PRO" id="PR:O15392"/>
<dbReference type="Proteomes" id="UP000005640">
    <property type="component" value="Chromosome 17"/>
</dbReference>
<dbReference type="RNAct" id="O15392">
    <property type="molecule type" value="protein"/>
</dbReference>
<dbReference type="Bgee" id="ENSG00000089685">
    <property type="expression patterns" value="Expressed in ventricular zone and 127 other cell types or tissues"/>
</dbReference>
<dbReference type="ExpressionAtlas" id="O15392">
    <property type="expression patterns" value="baseline and differential"/>
</dbReference>
<dbReference type="GO" id="GO:0005814">
    <property type="term" value="C:centriole"/>
    <property type="evidence" value="ECO:0000314"/>
    <property type="project" value="UniProtKB"/>
</dbReference>
<dbReference type="GO" id="GO:0032133">
    <property type="term" value="C:chromosome passenger complex"/>
    <property type="evidence" value="ECO:0000353"/>
    <property type="project" value="UniProtKB"/>
</dbReference>
<dbReference type="GO" id="GO:0000775">
    <property type="term" value="C:chromosome, centromeric region"/>
    <property type="evidence" value="ECO:0000314"/>
    <property type="project" value="UniProtKB"/>
</dbReference>
<dbReference type="GO" id="GO:0005737">
    <property type="term" value="C:cytoplasm"/>
    <property type="evidence" value="ECO:0000314"/>
    <property type="project" value="UniProtKB"/>
</dbReference>
<dbReference type="GO" id="GO:0005881">
    <property type="term" value="C:cytoplasmic microtubule"/>
    <property type="evidence" value="ECO:0000314"/>
    <property type="project" value="UniProtKB"/>
</dbReference>
<dbReference type="GO" id="GO:0005829">
    <property type="term" value="C:cytosol"/>
    <property type="evidence" value="ECO:0000314"/>
    <property type="project" value="UniProtKB"/>
</dbReference>
<dbReference type="GO" id="GO:0031021">
    <property type="term" value="C:interphase microtubule organizing center"/>
    <property type="evidence" value="ECO:0000314"/>
    <property type="project" value="UniProtKB"/>
</dbReference>
<dbReference type="GO" id="GO:0000776">
    <property type="term" value="C:kinetochore"/>
    <property type="evidence" value="ECO:0000314"/>
    <property type="project" value="UniProtKB"/>
</dbReference>
<dbReference type="GO" id="GO:0005874">
    <property type="term" value="C:microtubule"/>
    <property type="evidence" value="ECO:0007669"/>
    <property type="project" value="UniProtKB-KW"/>
</dbReference>
<dbReference type="GO" id="GO:0015630">
    <property type="term" value="C:microtubule cytoskeleton"/>
    <property type="evidence" value="ECO:0000314"/>
    <property type="project" value="ComplexPortal"/>
</dbReference>
<dbReference type="GO" id="GO:0030496">
    <property type="term" value="C:midbody"/>
    <property type="evidence" value="ECO:0000314"/>
    <property type="project" value="UniProtKB"/>
</dbReference>
<dbReference type="GO" id="GO:0000228">
    <property type="term" value="C:nuclear chromosome"/>
    <property type="evidence" value="ECO:0000314"/>
    <property type="project" value="UniProtKB"/>
</dbReference>
<dbReference type="GO" id="GO:0005654">
    <property type="term" value="C:nucleoplasm"/>
    <property type="evidence" value="ECO:0000304"/>
    <property type="project" value="Reactome"/>
</dbReference>
<dbReference type="GO" id="GO:0005634">
    <property type="term" value="C:nucleus"/>
    <property type="evidence" value="ECO:0000314"/>
    <property type="project" value="UniProtKB"/>
</dbReference>
<dbReference type="GO" id="GO:0032991">
    <property type="term" value="C:protein-containing complex"/>
    <property type="evidence" value="ECO:0000314"/>
    <property type="project" value="UniProtKB"/>
</dbReference>
<dbReference type="GO" id="GO:0005876">
    <property type="term" value="C:spindle microtubule"/>
    <property type="evidence" value="ECO:0000314"/>
    <property type="project" value="UniProtKB"/>
</dbReference>
<dbReference type="GO" id="GO:0051233">
    <property type="term" value="C:spindle midzone"/>
    <property type="evidence" value="ECO:0000318"/>
    <property type="project" value="GO_Central"/>
</dbReference>
<dbReference type="GO" id="GO:1990713">
    <property type="term" value="C:survivin complex"/>
    <property type="evidence" value="ECO:0000353"/>
    <property type="project" value="ComplexPortal"/>
</dbReference>
<dbReference type="GO" id="GO:0050897">
    <property type="term" value="F:cobalt ion binding"/>
    <property type="evidence" value="ECO:0000303"/>
    <property type="project" value="UniProtKB"/>
</dbReference>
<dbReference type="GO" id="GO:0004869">
    <property type="term" value="F:cysteine-type endopeptidase inhibitor activity"/>
    <property type="evidence" value="ECO:0007669"/>
    <property type="project" value="UniProtKB-KW"/>
</dbReference>
<dbReference type="GO" id="GO:0043027">
    <property type="term" value="F:cysteine-type endopeptidase inhibitor activity involved in apoptotic process"/>
    <property type="evidence" value="ECO:0000315"/>
    <property type="project" value="UniProtKB"/>
</dbReference>
<dbReference type="GO" id="GO:0019899">
    <property type="term" value="F:enzyme binding"/>
    <property type="evidence" value="ECO:0000353"/>
    <property type="project" value="UniProtKB"/>
</dbReference>
<dbReference type="GO" id="GO:0042802">
    <property type="term" value="F:identical protein binding"/>
    <property type="evidence" value="ECO:0000353"/>
    <property type="project" value="IntAct"/>
</dbReference>
<dbReference type="GO" id="GO:0046872">
    <property type="term" value="F:metal ion binding"/>
    <property type="evidence" value="ECO:0007669"/>
    <property type="project" value="UniProtKB-KW"/>
</dbReference>
<dbReference type="GO" id="GO:0008017">
    <property type="term" value="F:microtubule binding"/>
    <property type="evidence" value="ECO:0000314"/>
    <property type="project" value="UniProtKB"/>
</dbReference>
<dbReference type="GO" id="GO:0046982">
    <property type="term" value="F:protein heterodimerization activity"/>
    <property type="evidence" value="ECO:0000314"/>
    <property type="project" value="UniProtKB"/>
</dbReference>
<dbReference type="GO" id="GO:0042803">
    <property type="term" value="F:protein homodimerization activity"/>
    <property type="evidence" value="ECO:0000314"/>
    <property type="project" value="UniProtKB"/>
</dbReference>
<dbReference type="GO" id="GO:0051087">
    <property type="term" value="F:protein-folding chaperone binding"/>
    <property type="evidence" value="ECO:0000353"/>
    <property type="project" value="UniProtKB"/>
</dbReference>
<dbReference type="GO" id="GO:0031267">
    <property type="term" value="F:small GTPase binding"/>
    <property type="evidence" value="ECO:0000353"/>
    <property type="project" value="UniProtKB"/>
</dbReference>
<dbReference type="GO" id="GO:0015631">
    <property type="term" value="F:tubulin binding"/>
    <property type="evidence" value="ECO:0000314"/>
    <property type="project" value="UniProtKB"/>
</dbReference>
<dbReference type="GO" id="GO:0008270">
    <property type="term" value="F:zinc ion binding"/>
    <property type="evidence" value="ECO:0000314"/>
    <property type="project" value="UniProtKB"/>
</dbReference>
<dbReference type="GO" id="GO:0006915">
    <property type="term" value="P:apoptotic process"/>
    <property type="evidence" value="ECO:0007669"/>
    <property type="project" value="UniProtKB-KW"/>
</dbReference>
<dbReference type="GO" id="GO:0051301">
    <property type="term" value="P:cell division"/>
    <property type="evidence" value="ECO:0000315"/>
    <property type="project" value="UniProtKB"/>
</dbReference>
<dbReference type="GO" id="GO:0007059">
    <property type="term" value="P:chromosome segregation"/>
    <property type="evidence" value="ECO:0000318"/>
    <property type="project" value="GO_Central"/>
</dbReference>
<dbReference type="GO" id="GO:0051303">
    <property type="term" value="P:establishment of chromosome localization"/>
    <property type="evidence" value="ECO:0000315"/>
    <property type="project" value="UniProtKB"/>
</dbReference>
<dbReference type="GO" id="GO:0000086">
    <property type="term" value="P:G2/M transition of mitotic cell cycle"/>
    <property type="evidence" value="ECO:0000314"/>
    <property type="project" value="UniProtKB"/>
</dbReference>
<dbReference type="GO" id="GO:0000278">
    <property type="term" value="P:mitotic cell cycle"/>
    <property type="evidence" value="ECO:0000304"/>
    <property type="project" value="UniProtKB"/>
</dbReference>
<dbReference type="GO" id="GO:0000281">
    <property type="term" value="P:mitotic cytokinesis"/>
    <property type="evidence" value="ECO:0000315"/>
    <property type="project" value="UniProtKB"/>
</dbReference>
<dbReference type="GO" id="GO:0090307">
    <property type="term" value="P:mitotic spindle assembly"/>
    <property type="evidence" value="ECO:0000303"/>
    <property type="project" value="ComplexPortal"/>
</dbReference>
<dbReference type="GO" id="GO:0007094">
    <property type="term" value="P:mitotic spindle assembly checkpoint signaling"/>
    <property type="evidence" value="ECO:0000315"/>
    <property type="project" value="UniProtKB"/>
</dbReference>
<dbReference type="GO" id="GO:0051256">
    <property type="term" value="P:mitotic spindle midzone assembly"/>
    <property type="evidence" value="ECO:0000303"/>
    <property type="project" value="ComplexPortal"/>
</dbReference>
<dbReference type="GO" id="GO:0007052">
    <property type="term" value="P:mitotic spindle organization"/>
    <property type="evidence" value="ECO:0000318"/>
    <property type="project" value="GO_Central"/>
</dbReference>
<dbReference type="GO" id="GO:0043066">
    <property type="term" value="P:negative regulation of apoptotic process"/>
    <property type="evidence" value="ECO:0000314"/>
    <property type="project" value="UniProtKB"/>
</dbReference>
<dbReference type="GO" id="GO:0045892">
    <property type="term" value="P:negative regulation of DNA-templated transcription"/>
    <property type="evidence" value="ECO:0000315"/>
    <property type="project" value="UniProtKB"/>
</dbReference>
<dbReference type="GO" id="GO:1902425">
    <property type="term" value="P:positive regulation of attachment of mitotic spindle microtubules to kinetochore"/>
    <property type="evidence" value="ECO:0000303"/>
    <property type="project" value="ComplexPortal"/>
</dbReference>
<dbReference type="GO" id="GO:0008284">
    <property type="term" value="P:positive regulation of cell population proliferation"/>
    <property type="evidence" value="ECO:0000304"/>
    <property type="project" value="UniProtKB"/>
</dbReference>
<dbReference type="GO" id="GO:0031536">
    <property type="term" value="P:positive regulation of exit from mitosis"/>
    <property type="evidence" value="ECO:0000315"/>
    <property type="project" value="UniProtKB"/>
</dbReference>
<dbReference type="GO" id="GO:0045931">
    <property type="term" value="P:positive regulation of mitotic cell cycle"/>
    <property type="evidence" value="ECO:0000315"/>
    <property type="project" value="UniProtKB"/>
</dbReference>
<dbReference type="GO" id="GO:0090267">
    <property type="term" value="P:positive regulation of mitotic cell cycle spindle assembly checkpoint"/>
    <property type="evidence" value="ECO:0000303"/>
    <property type="project" value="ComplexPortal"/>
</dbReference>
<dbReference type="GO" id="GO:1903490">
    <property type="term" value="P:positive regulation of mitotic cytokinesis"/>
    <property type="evidence" value="ECO:0000303"/>
    <property type="project" value="ComplexPortal"/>
</dbReference>
<dbReference type="GO" id="GO:1901970">
    <property type="term" value="P:positive regulation of mitotic sister chromatid separation"/>
    <property type="evidence" value="ECO:0000303"/>
    <property type="project" value="ComplexPortal"/>
</dbReference>
<dbReference type="GO" id="GO:0031503">
    <property type="term" value="P:protein-containing complex localization"/>
    <property type="evidence" value="ECO:0000315"/>
    <property type="project" value="UniProtKB"/>
</dbReference>
<dbReference type="GO" id="GO:0007605">
    <property type="term" value="P:sensory perception of sound"/>
    <property type="evidence" value="ECO:0000270"/>
    <property type="project" value="UniProtKB"/>
</dbReference>
<dbReference type="CDD" id="cd00022">
    <property type="entry name" value="BIR"/>
    <property type="match status" value="1"/>
</dbReference>
<dbReference type="FunFam" id="1.10.1170.10:FF:000009">
    <property type="entry name" value="Baculoviral IAP repeat-containing protein 5"/>
    <property type="match status" value="1"/>
</dbReference>
<dbReference type="Gene3D" id="1.10.1170.10">
    <property type="entry name" value="Inhibitor Of Apoptosis Protein (2mihbC-IAP-1), Chain A"/>
    <property type="match status" value="1"/>
</dbReference>
<dbReference type="IDEAL" id="IID00186"/>
<dbReference type="InterPro" id="IPR051190">
    <property type="entry name" value="Baculoviral_IAP"/>
</dbReference>
<dbReference type="InterPro" id="IPR001370">
    <property type="entry name" value="BIR_rpt"/>
</dbReference>
<dbReference type="PANTHER" id="PTHR46771:SF3">
    <property type="entry name" value="BACULOVIRAL IAP REPEAT-CONTAINING PROTEIN 5"/>
    <property type="match status" value="1"/>
</dbReference>
<dbReference type="PANTHER" id="PTHR46771">
    <property type="entry name" value="DETERIN"/>
    <property type="match status" value="1"/>
</dbReference>
<dbReference type="Pfam" id="PF00653">
    <property type="entry name" value="BIR"/>
    <property type="match status" value="1"/>
</dbReference>
<dbReference type="SMART" id="SM00238">
    <property type="entry name" value="BIR"/>
    <property type="match status" value="1"/>
</dbReference>
<dbReference type="SUPFAM" id="SSF57924">
    <property type="entry name" value="Inhibitor of apoptosis (IAP) repeat"/>
    <property type="match status" value="1"/>
</dbReference>
<dbReference type="PROSITE" id="PS50143">
    <property type="entry name" value="BIR_REPEAT_2"/>
    <property type="match status" value="1"/>
</dbReference>
<comment type="function">
    <text evidence="2 5 11 12 22 23 24 25 28 29 32 35 37">Multitasking protein that has dual roles in promoting cell proliferation and preventing apoptosis (PubMed:20627126, PubMed:21364656, PubMed:25778398, PubMed:28218735, PubMed:9859993). Component of a chromosome passage protein complex (CPC) which is essential for chromosome alignment and segregation during mitosis and cytokinesis (PubMed:16322459). Acts as an important regulator of the localization of this complex; directs CPC movement to different locations from the inner centromere during prometaphase to midbody during cytokinesis and participates in the organization of the center spindle by associating with polymerized microtubules (PubMed:20826784). Involved in the recruitment of CPC to centromeres during early mitosis via association with histone H3 phosphorylated at 'Thr-3' (H3pT3) during mitosis (PubMed:20929775). The complex with RAN plays a role in mitotic spindle formation by serving as a physical scaffold to help deliver the RAN effector molecule TPX2 to microtubules (PubMed:18591255). May counteract a default induction of apoptosis in G2/M phase (PubMed:9859993). The acetylated form represses STAT3 transactivation of target gene promoters (PubMed:20826784). May play a role in neoplasia (PubMed:10626797). Inhibitor of CASP3 and CASP7 (PubMed:21536684). Essential for the maintenance of mitochondrial integrity and function (PubMed:25778398). Isoform 2 and isoform 3 do not appear to play vital roles in mitosis (PubMed:12773388, PubMed:16291752). Isoform 3 shows a marked reduction in its anti-apoptotic effects when compared with the displayed wild-type isoform (PubMed:10626797).</text>
</comment>
<comment type="subunit">
    <text evidence="5 6 8 9 10 11 12 14 15 18 19 21 22 24 26 29 32 35">Monomer or homodimer. Exists as a homodimer in the apo state and as a monomer in the CPC-bound state. The monomer protects cells against apoptosis more efficiently than the dimer. Only the dimeric form is capable of enhancing tubulin stability in cells. When phosphorylated, interacts with LAMTOR5/HBXIP; the resulting complex binds pro-CASP9, as well as active CASP9, but much less efficiently. Component of the chromosomal passenger complex (CPC) composed of at least BIRC5/survivin, CDCA8/borealin, INCENP, AURKB or AURKC; in the complex forms a triple-helix bundle-based subcomplex with INCENP and CDCA8 (PubMed:17956729). Interacts with JTB. Interacts (via BIR domain) with histone H3 phosphorylated at 'Thr-3' (H3pT3). Interacts with EVI5. Interacts with GTP-bound RAN in both the S and M phases of the cell cycle. Interacts with USP9X. Interacts with tubulin. Interacts with BIRC2/c-IAP1. The acetylated form at Lys-129 interacts with STAT3. The monomeric form deacetylated at Lys-129 interacts with XPO1/CRM1. The monomeric form interacts with XIAP/BIRC4. Both the dimeric and monomeric form can interact with DIABLO/SMAC. Interacts with BIRC6/bruce. Interacts with FBXL7; this interaction facilitates the polyubiquitination and subsequent proteasomal degradation of BIRC5 by the SCF(FBXL7) E3 ubiquitin-protein ligase complex (PubMed:25778398, PubMed:28218735).</text>
</comment>
<comment type="subunit">
    <text evidence="34">(Microbial infection) Interacts with Epstein-Barr virus (EBV) EBNA1; this interaction is probably important for EBV episome maintenance in Burkitt's lymphoma cells.</text>
</comment>
<comment type="interaction">
    <interactant intactId="EBI-518823">
        <id>O15392</id>
    </interactant>
    <interactant intactId="EBI-21535880">
        <id>Q92870-2</id>
        <label>APBB2</label>
    </interactant>
    <organismsDiffer>false</organismsDiffer>
    <experiments>3</experiments>
</comment>
<comment type="interaction">
    <interactant intactId="EBI-518823">
        <id>O15392</id>
    </interactant>
    <interactant intactId="EBI-77613">
        <id>P05067</id>
        <label>APP</label>
    </interactant>
    <organismsDiffer>false</organismsDiffer>
    <experiments>3</experiments>
</comment>
<comment type="interaction">
    <interactant intactId="EBI-518823">
        <id>O15392</id>
    </interactant>
    <interactant intactId="EBI-17264467">
        <id>P05067-2</id>
        <label>APP</label>
    </interactant>
    <organismsDiffer>false</organismsDiffer>
    <experiments>3</experiments>
</comment>
<comment type="interaction">
    <interactant intactId="EBI-518823">
        <id>O15392</id>
    </interactant>
    <interactant intactId="EBI-448680">
        <id>O14965</id>
        <label>AURKA</label>
    </interactant>
    <organismsDiffer>false</organismsDiffer>
    <experiments>2</experiments>
</comment>
<comment type="interaction">
    <interactant intactId="EBI-518823">
        <id>O15392</id>
    </interactant>
    <interactant intactId="EBI-624291">
        <id>Q96GD4</id>
        <label>AURKB</label>
    </interactant>
    <organismsDiffer>false</organismsDiffer>
    <experiments>13</experiments>
</comment>
<comment type="interaction">
    <interactant intactId="EBI-518823">
        <id>O15392</id>
    </interactant>
    <interactant intactId="EBI-3926851">
        <id>Q9UQB9</id>
        <label>AURKC</label>
    </interactant>
    <organismsDiffer>false</organismsDiffer>
    <experiments>10</experiments>
</comment>
<comment type="interaction">
    <interactant intactId="EBI-518823">
        <id>O15392</id>
    </interactant>
    <interactant intactId="EBI-949378">
        <id>Q14457</id>
        <label>BECN1</label>
    </interactant>
    <organismsDiffer>false</organismsDiffer>
    <experiments>3</experiments>
</comment>
<comment type="interaction">
    <interactant intactId="EBI-518823">
        <id>O15392</id>
    </interactant>
    <interactant intactId="EBI-518823">
        <id>O15392</id>
        <label>BIRC5</label>
    </interactant>
    <organismsDiffer>false</organismsDiffer>
    <experiments>2</experiments>
</comment>
<comment type="interaction">
    <interactant intactId="EBI-518823">
        <id>O15392</id>
    </interactant>
    <interactant intactId="EBI-739674">
        <id>Q15834</id>
        <label>CCDC85B</label>
    </interactant>
    <organismsDiffer>false</organismsDiffer>
    <experiments>3</experiments>
</comment>
<comment type="interaction">
    <interactant intactId="EBI-518823">
        <id>O15392</id>
    </interactant>
    <interactant intactId="EBI-979174">
        <id>Q53HL2</id>
        <label>CDCA8</label>
    </interactant>
    <organismsDiffer>false</organismsDiffer>
    <experiments>21</experiments>
</comment>
<comment type="interaction">
    <interactant intactId="EBI-518823">
        <id>O15392</id>
    </interactant>
    <interactant intactId="EBI-444308">
        <id>P06493</id>
        <label>CDK1</label>
    </interactant>
    <organismsDiffer>false</organismsDiffer>
    <experiments>6</experiments>
</comment>
<comment type="interaction">
    <interactant intactId="EBI-518823">
        <id>O15392</id>
    </interactant>
    <interactant intactId="EBI-25840379">
        <id>Q14203-5</id>
        <label>DCTN1</label>
    </interactant>
    <organismsDiffer>false</organismsDiffer>
    <experiments>3</experiments>
</comment>
<comment type="interaction">
    <interactant intactId="EBI-518823">
        <id>O15392</id>
    </interactant>
    <interactant intactId="EBI-517508">
        <id>Q9NR28</id>
        <label>DIABLO</label>
    </interactant>
    <organismsDiffer>false</organismsDiffer>
    <experiments>2</experiments>
</comment>
<comment type="interaction">
    <interactant intactId="EBI-518823">
        <id>O15392</id>
    </interactant>
    <interactant intactId="EBI-9248152">
        <id>Q86XJ1</id>
        <label>GAS2L3</label>
    </interactant>
    <organismsDiffer>false</organismsDiffer>
    <experiments>4</experiments>
</comment>
<comment type="interaction">
    <interactant intactId="EBI-518823">
        <id>O15392</id>
    </interactant>
    <interactant intactId="EBI-11110431">
        <id>Q8TB36</id>
        <label>GDAP1</label>
    </interactant>
    <organismsDiffer>false</organismsDiffer>
    <experiments>3</experiments>
</comment>
<comment type="interaction">
    <interactant intactId="EBI-518823">
        <id>O15392</id>
    </interactant>
    <interactant intactId="EBI-466029">
        <id>P42858</id>
        <label>HTT</label>
    </interactant>
    <organismsDiffer>false</organismsDiffer>
    <experiments>15</experiments>
</comment>
<comment type="interaction">
    <interactant intactId="EBI-518823">
        <id>O15392</id>
    </interactant>
    <interactant intactId="EBI-307907">
        <id>Q9NQS7</id>
        <label>INCENP</label>
    </interactant>
    <organismsDiffer>false</organismsDiffer>
    <experiments>11</experiments>
</comment>
<comment type="interaction">
    <interactant intactId="EBI-518823">
        <id>O15392</id>
    </interactant>
    <interactant intactId="EBI-713382">
        <id>O43504</id>
        <label>LAMTOR5</label>
    </interactant>
    <organismsDiffer>false</organismsDiffer>
    <experiments>3</experiments>
</comment>
<comment type="interaction">
    <interactant intactId="EBI-518823">
        <id>O15392</id>
    </interactant>
    <interactant intactId="EBI-748974">
        <id>Q96CV9</id>
        <label>OPTN</label>
    </interactant>
    <organismsDiffer>false</organismsDiffer>
    <experiments>3</experiments>
</comment>
<comment type="interaction">
    <interactant intactId="EBI-518823">
        <id>O15392</id>
    </interactant>
    <interactant intactId="EBI-752057">
        <id>Q7Z412</id>
        <label>PEX26</label>
    </interactant>
    <organismsDiffer>false</organismsDiffer>
    <experiments>3</experiments>
</comment>
<comment type="interaction">
    <interactant intactId="EBI-518823">
        <id>O15392</id>
    </interactant>
    <interactant intactId="EBI-2846068">
        <id>Q9BXM7</id>
        <label>PINK1</label>
    </interactant>
    <organismsDiffer>false</organismsDiffer>
    <experiments>3</experiments>
</comment>
<comment type="interaction">
    <interactant intactId="EBI-518823">
        <id>O15392</id>
    </interactant>
    <interactant intactId="EBI-286642">
        <id>P62826</id>
        <label>RAN</label>
    </interactant>
    <organismsDiffer>false</organismsDiffer>
    <experiments>7</experiments>
</comment>
<comment type="interaction">
    <interactant intactId="EBI-518823">
        <id>O15392</id>
    </interactant>
    <interactant intactId="EBI-985879">
        <id>P37840</id>
        <label>SNCA</label>
    </interactant>
    <organismsDiffer>false</organismsDiffer>
    <experiments>3</experiments>
</comment>
<comment type="interaction">
    <interactant intactId="EBI-518823">
        <id>O15392</id>
    </interactant>
    <interactant intactId="EBI-372899">
        <id>Q13148</id>
        <label>TARDBP</label>
    </interactant>
    <organismsDiffer>false</organismsDiffer>
    <experiments>6</experiments>
</comment>
<comment type="interaction">
    <interactant intactId="EBI-518823">
        <id>O15392</id>
    </interactant>
    <interactant intactId="EBI-714860">
        <id>P09936</id>
        <label>UCHL1</label>
    </interactant>
    <organismsDiffer>false</organismsDiffer>
    <experiments>3</experiments>
</comment>
<comment type="interaction">
    <interactant intactId="EBI-518823">
        <id>O15392</id>
    </interactant>
    <interactant intactId="EBI-355867">
        <id>O14980</id>
        <label>XPO1</label>
    </interactant>
    <organismsDiffer>false</organismsDiffer>
    <experiments>2</experiments>
</comment>
<comment type="interaction">
    <interactant intactId="EBI-518838">
        <id>O15392-1</id>
    </interactant>
    <interactant intactId="EBI-624291">
        <id>Q96GD4</id>
        <label>AURKB</label>
    </interactant>
    <organismsDiffer>false</organismsDiffer>
    <experiments>2</experiments>
</comment>
<comment type="interaction">
    <interactant intactId="EBI-518838">
        <id>O15392-1</id>
    </interactant>
    <interactant intactId="EBI-518838">
        <id>O15392-1</id>
        <label>BIRC5</label>
    </interactant>
    <organismsDiffer>false</organismsDiffer>
    <experiments>2</experiments>
</comment>
<comment type="interaction">
    <interactant intactId="EBI-518838">
        <id>O15392-1</id>
    </interactant>
    <interactant intactId="EBI-518842">
        <id>O15392-2</id>
        <label>BIRC5</label>
    </interactant>
    <organismsDiffer>false</organismsDiffer>
    <experiments>2</experiments>
</comment>
<comment type="interaction">
    <interactant intactId="EBI-518838">
        <id>O15392-1</id>
    </interactant>
    <interactant intactId="EBI-979174">
        <id>Q53HL2</id>
        <label>CDCA8</label>
    </interactant>
    <organismsDiffer>false</organismsDiffer>
    <experiments>2</experiments>
</comment>
<comment type="interaction">
    <interactant intactId="EBI-518842">
        <id>O15392-2</id>
    </interactant>
    <interactant intactId="EBI-624291">
        <id>Q96GD4</id>
        <label>AURKB</label>
    </interactant>
    <organismsDiffer>false</organismsDiffer>
    <experiments>2</experiments>
</comment>
<comment type="interaction">
    <interactant intactId="EBI-518842">
        <id>O15392-2</id>
    </interactant>
    <interactant intactId="EBI-979174">
        <id>Q53HL2</id>
        <label>CDCA8</label>
    </interactant>
    <organismsDiffer>false</organismsDiffer>
    <experiments>2</experiments>
</comment>
<comment type="subcellular location">
    <subcellularLocation>
        <location evidence="23 24 28">Cytoplasm</location>
    </subcellularLocation>
    <subcellularLocation>
        <location evidence="23 24 28">Nucleus</location>
    </subcellularLocation>
    <subcellularLocation>
        <location evidence="6">Chromosome</location>
    </subcellularLocation>
    <subcellularLocation>
        <location evidence="4 6 12">Chromosome</location>
        <location evidence="4 6 12">Centromere</location>
    </subcellularLocation>
    <subcellularLocation>
        <location evidence="4">Cytoplasm</location>
        <location evidence="4">Cytoskeleton</location>
        <location evidence="4">Spindle</location>
    </subcellularLocation>
    <subcellularLocation>
        <location evidence="4">Chromosome</location>
        <location evidence="4">Centromere</location>
        <location evidence="4">Kinetochore</location>
    </subcellularLocation>
    <subcellularLocation>
        <location evidence="9">Midbody</location>
    </subcellularLocation>
    <text evidence="1 4 6 24">Localizes at the centromeres from prophase to metaphase, at the spindle midzone during anaphase and a the midbody during telophase and cytokinesis. Accumulates in the nucleus upon treatment with leptomycin B (LMB), a XPO1/CRM1 nuclear export inhibitor (By similarity). Localizes on chromosome arms and inner centromeres from prophase through metaphase. Localizes to kinetochores in metaphase, distributes to the midzone microtubules in anaphase and at telophase, localizes exclusively to the midbody (PubMed:11084331). Colocalizes with AURKB at mitotic chromosomes (PubMed:14610074). Acetylation at Lys-129 directs its localization to the nucleus by enhancing homodimerization and thereby inhibiting XPO1/CRM1-mediated nuclear export (PubMed:20826784).</text>
</comment>
<comment type="alternative products">
    <event type="alternative splicing"/>
    <isoform>
        <id>O15392-1</id>
        <name>1</name>
        <name>Alpha</name>
        <sequence type="displayed"/>
    </isoform>
    <isoform>
        <id>O15392-2</id>
        <name>2</name>
        <name>2B</name>
        <name>Beta</name>
        <sequence type="described" ref="VSP_002454"/>
    </isoform>
    <isoform>
        <id>O15392-3</id>
        <name>3</name>
        <name>DeltaEx3</name>
        <sequence type="described" ref="VSP_020338"/>
    </isoform>
    <isoform>
        <id>O15392-4</id>
        <name>4</name>
        <name>3B</name>
        <sequence type="described" ref="VSP_020342"/>
    </isoform>
    <isoform>
        <id>O15392-5</id>
        <name>5</name>
        <name>SI</name>
        <sequence type="described" ref="VSP_020341"/>
    </isoform>
    <isoform>
        <id>O15392-6</id>
        <name>6</name>
        <name>3 alpha</name>
        <sequence type="described" ref="VSP_020339"/>
    </isoform>
    <isoform>
        <id>O15392-7</id>
        <name>7</name>
        <name>2 alpha</name>
        <sequence type="described" ref="VSP_020340"/>
    </isoform>
</comment>
<comment type="tissue specificity">
    <text evidence="2 7 13 23 28">Expressed only in fetal kidney and liver, and to lesser extent, lung and brain (PubMed:10626797). Abundantly expressed in adenocarcinoma (lung, pancreas, colon, breast, and prostate) and in high-grade lymphomas (PubMed:14741722, PubMed:16329164). Also expressed in various renal cell carcinoma cell lines (PubMed:10626797). Expressed in cochlea including the organ of Corti, the lateral wall, the interdental cells of the Limbus as well as in Schwann cells and cells of the cochlear nerve and the spiral ganglions (at protein level). Not expressed in cells of the inner and outer sulcus or the Reissner's membrane (at protein level) (PubMed:20627126, PubMed:21364656).</text>
</comment>
<comment type="developmental stage">
    <text evidence="22">Expression is cell cycle-dependent and peaks at mitosis.</text>
</comment>
<comment type="induction">
    <text evidence="20">Up-regulated by COMP.</text>
</comment>
<comment type="domain">
    <text evidence="5">The BIR repeat is necessary and sufficient for LAMTOR5 binding.</text>
</comment>
<comment type="PTM">
    <text evidence="12 30 36">Ubiquitinated by the Cul9-RING ubiquitin-protein ligase complex, leading to its degradation. Ubiquitination is required for centrosomal targeting. Deubiquitinated by USP35 or USP38; leading to stabilization (PubMed:34438346).</text>
</comment>
<comment type="PTM">
    <text evidence="3 6 27 31 33">In vitro phosphorylation at Thr-117 by AURKB prevents interaction with INCENP and localization to mitotic chromosomes (PubMed:14610074). Phosphorylation at Thr-48 by CK2 is critical for its mitotic and anti-apoptotic activities (PubMed:21252625). Phosphorylation at Thr-34 by CDK15 is critical for its anti-apoptotic activity (PubMed:24866247). Phosphorylation at Ser-20 by AURKC is critical for regulation of proper chromosome alignment and segregation, and possibly cytokinesis.</text>
</comment>
<comment type="PTM">
    <text evidence="24">Acetylation at Lys-129 by CBP results in its homodimerization, while deacetylation promotes the formation of monomers which heterodimerize with XPO1/CRM1 which facilitates its nuclear export. The acetylated form represses STAT3 transactivation. The dynamic equilibrium between its acetylation and deacetylation at Lys-129 determines its interaction with XPO1/CRM1, its subsequent subcellular localization, and its ability to inhibit STAT3 transactivation.</text>
</comment>
<comment type="similarity">
    <text evidence="44">Belongs to the IAP family.</text>
</comment>
<reference key="1">
    <citation type="journal article" date="1997" name="Nat. Med.">
        <title>A novel anti-apoptosis gene, survivin, expressed in cancer and lymphoma.</title>
        <authorList>
            <person name="Ambrosini G."/>
            <person name="Adida C."/>
            <person name="Altieri D.C."/>
        </authorList>
    </citation>
    <scope>NUCLEOTIDE SEQUENCE [GENOMIC DNA] (ISOFORM 1)</scope>
</reference>
<reference key="2">
    <citation type="journal article" date="1999" name="Cancer Res.">
        <title>Survivin-deltaEx3 and survivin-2B: two novel splice variants of the apoptosis inhibitor survivin with different antiapoptotic properties.</title>
        <authorList>
            <person name="Mahotka C."/>
            <person name="Wenzel M."/>
            <person name="Springer E."/>
            <person name="Gabbert H.E."/>
            <person name="Gerharz C.D."/>
        </authorList>
    </citation>
    <scope>NUCLEOTIDE SEQUENCE [MRNA] (ISOFORMS 2 AND 3)</scope>
    <scope>FUNCTION</scope>
    <scope>TISSUE SPECIFICITY</scope>
</reference>
<reference key="3">
    <citation type="journal article" date="2000" name="Curr. Biol.">
        <title>Survivin and the inner centromere protein INCENP show similar cell-cycle localization and gene knockout phenotype.</title>
        <authorList>
            <person name="Uren A.G."/>
            <person name="Wong L."/>
            <person name="Pakusch M."/>
            <person name="Fowler K.J."/>
            <person name="Burrows F.J."/>
            <person name="Vaux D.L."/>
            <person name="Choo K.H."/>
        </authorList>
    </citation>
    <scope>NUCLEOTIDE SEQUENCE [MRNA] (ISOFORM 1)</scope>
    <scope>SUBCELLULAR LOCATION</scope>
</reference>
<reference key="4">
    <citation type="journal article" date="2004" name="Biochem. Biophys. Res. Commun.">
        <title>Identification of a novel splice variant of the human anti-apoptosis gene survivin.</title>
        <authorList>
            <person name="Badran A."/>
            <person name="Yoshida A."/>
            <person name="Ishikawa K."/>
            <person name="Goi T."/>
            <person name="Yamaguchi A."/>
            <person name="Ueda T."/>
            <person name="Inuzuka M."/>
        </authorList>
    </citation>
    <scope>NUCLEOTIDE SEQUENCE [MRNA] (ISOFORM 4)</scope>
    <scope>TISSUE SPECIFICITY</scope>
    <source>
        <tissue>Myeloid leukemia cell</tissue>
    </source>
</reference>
<reference key="5">
    <citation type="journal article" date="2005" name="DNA Seq.">
        <title>Molecular cloning and bioinformatics analysis of a novel spliced variant of survivin from human breast cancer cells.</title>
        <authorList>
            <person name="Zheng W."/>
            <person name="Ma X."/>
            <person name="Wei D."/>
            <person name="Wang T."/>
            <person name="Ma Y."/>
            <person name="Yang S."/>
        </authorList>
    </citation>
    <scope>NUCLEOTIDE SEQUENCE [MRNA] (ISOFORM 5)</scope>
    <scope>TISSUE SPECIFICITY</scope>
    <source>
        <tissue>Mammary cancer</tissue>
    </source>
</reference>
<reference key="6">
    <citation type="submission" date="1999-06" db="EMBL/GenBank/DDBJ databases">
        <title>An isoform of survivin (survivin-beta) which has 23 amino acids insertion into the BIR domain.</title>
        <authorList>
            <person name="Kageyama H."/>
            <person name="Islam A."/>
            <person name="Takayasu H."/>
            <person name="Nakagawara A."/>
        </authorList>
    </citation>
    <scope>NUCLEOTIDE SEQUENCE [MRNA] (ISOFORM 2)</scope>
    <source>
        <tissue>Neuroblastoma</tissue>
    </source>
</reference>
<reference key="7">
    <citation type="submission" date="2005-02" db="EMBL/GenBank/DDBJ databases">
        <title>Survivin 2 alpha: a novel survivin splice variant expressed in human malignancies.</title>
        <authorList>
            <person name="Caldas H."/>
            <person name="Honsey L.E."/>
            <person name="Altura R.A."/>
        </authorList>
    </citation>
    <scope>NUCLEOTIDE SEQUENCE [MRNA] (ISOFORM 7)</scope>
</reference>
<reference key="8">
    <citation type="submission" date="2005-11" db="EMBL/GenBank/DDBJ databases">
        <title>Identification of a novel survivin splicing variant 3alpha in acute myeloid leukemia.</title>
        <authorList>
            <person name="Vietri M.T."/>
            <person name="Cioffi M."/>
            <person name="Sessa M."/>
            <person name="Sica V."/>
            <person name="Molinari A.M."/>
        </authorList>
    </citation>
    <scope>NUCLEOTIDE SEQUENCE [MRNA] (ISOFORM 6)</scope>
    <source>
        <tissue>Myeloid leukemia cell</tissue>
    </source>
</reference>
<reference key="9">
    <citation type="submission" date="2004-06" db="EMBL/GenBank/DDBJ databases">
        <title>Cloning of human full open reading frames in Gateway(TM) system entry vector (pDONR201).</title>
        <authorList>
            <person name="Ebert L."/>
            <person name="Schick M."/>
            <person name="Neubert P."/>
            <person name="Schatten R."/>
            <person name="Henze S."/>
            <person name="Korn B."/>
        </authorList>
    </citation>
    <scope>NUCLEOTIDE SEQUENCE [LARGE SCALE MRNA] (ISOFORM 1)</scope>
</reference>
<reference key="10">
    <citation type="journal article" date="2004" name="Nat. Genet.">
        <title>Complete sequencing and characterization of 21,243 full-length human cDNAs.</title>
        <authorList>
            <person name="Ota T."/>
            <person name="Suzuki Y."/>
            <person name="Nishikawa T."/>
            <person name="Otsuki T."/>
            <person name="Sugiyama T."/>
            <person name="Irie R."/>
            <person name="Wakamatsu A."/>
            <person name="Hayashi K."/>
            <person name="Sato H."/>
            <person name="Nagai K."/>
            <person name="Kimura K."/>
            <person name="Makita H."/>
            <person name="Sekine M."/>
            <person name="Obayashi M."/>
            <person name="Nishi T."/>
            <person name="Shibahara T."/>
            <person name="Tanaka T."/>
            <person name="Ishii S."/>
            <person name="Yamamoto J."/>
            <person name="Saito K."/>
            <person name="Kawai Y."/>
            <person name="Isono Y."/>
            <person name="Nakamura Y."/>
            <person name="Nagahari K."/>
            <person name="Murakami K."/>
            <person name="Yasuda T."/>
            <person name="Iwayanagi T."/>
            <person name="Wagatsuma M."/>
            <person name="Shiratori A."/>
            <person name="Sudo H."/>
            <person name="Hosoiri T."/>
            <person name="Kaku Y."/>
            <person name="Kodaira H."/>
            <person name="Kondo H."/>
            <person name="Sugawara M."/>
            <person name="Takahashi M."/>
            <person name="Kanda K."/>
            <person name="Yokoi T."/>
            <person name="Furuya T."/>
            <person name="Kikkawa E."/>
            <person name="Omura Y."/>
            <person name="Abe K."/>
            <person name="Kamihara K."/>
            <person name="Katsuta N."/>
            <person name="Sato K."/>
            <person name="Tanikawa M."/>
            <person name="Yamazaki M."/>
            <person name="Ninomiya K."/>
            <person name="Ishibashi T."/>
            <person name="Yamashita H."/>
            <person name="Murakawa K."/>
            <person name="Fujimori K."/>
            <person name="Tanai H."/>
            <person name="Kimata M."/>
            <person name="Watanabe M."/>
            <person name="Hiraoka S."/>
            <person name="Chiba Y."/>
            <person name="Ishida S."/>
            <person name="Ono Y."/>
            <person name="Takiguchi S."/>
            <person name="Watanabe S."/>
            <person name="Yosida M."/>
            <person name="Hotuta T."/>
            <person name="Kusano J."/>
            <person name="Kanehori K."/>
            <person name="Takahashi-Fujii A."/>
            <person name="Hara H."/>
            <person name="Tanase T.-O."/>
            <person name="Nomura Y."/>
            <person name="Togiya S."/>
            <person name="Komai F."/>
            <person name="Hara R."/>
            <person name="Takeuchi K."/>
            <person name="Arita M."/>
            <person name="Imose N."/>
            <person name="Musashino K."/>
            <person name="Yuuki H."/>
            <person name="Oshima A."/>
            <person name="Sasaki N."/>
            <person name="Aotsuka S."/>
            <person name="Yoshikawa Y."/>
            <person name="Matsunawa H."/>
            <person name="Ichihara T."/>
            <person name="Shiohata N."/>
            <person name="Sano S."/>
            <person name="Moriya S."/>
            <person name="Momiyama H."/>
            <person name="Satoh N."/>
            <person name="Takami S."/>
            <person name="Terashima Y."/>
            <person name="Suzuki O."/>
            <person name="Nakagawa S."/>
            <person name="Senoh A."/>
            <person name="Mizoguchi H."/>
            <person name="Goto Y."/>
            <person name="Shimizu F."/>
            <person name="Wakebe H."/>
            <person name="Hishigaki H."/>
            <person name="Watanabe T."/>
            <person name="Sugiyama A."/>
            <person name="Takemoto M."/>
            <person name="Kawakami B."/>
            <person name="Yamazaki M."/>
            <person name="Watanabe K."/>
            <person name="Kumagai A."/>
            <person name="Itakura S."/>
            <person name="Fukuzumi Y."/>
            <person name="Fujimori Y."/>
            <person name="Komiyama M."/>
            <person name="Tashiro H."/>
            <person name="Tanigami A."/>
            <person name="Fujiwara T."/>
            <person name="Ono T."/>
            <person name="Yamada K."/>
            <person name="Fujii Y."/>
            <person name="Ozaki K."/>
            <person name="Hirao M."/>
            <person name="Ohmori Y."/>
            <person name="Kawabata A."/>
            <person name="Hikiji T."/>
            <person name="Kobatake N."/>
            <person name="Inagaki H."/>
            <person name="Ikema Y."/>
            <person name="Okamoto S."/>
            <person name="Okitani R."/>
            <person name="Kawakami T."/>
            <person name="Noguchi S."/>
            <person name="Itoh T."/>
            <person name="Shigeta K."/>
            <person name="Senba T."/>
            <person name="Matsumura K."/>
            <person name="Nakajima Y."/>
            <person name="Mizuno T."/>
            <person name="Morinaga M."/>
            <person name="Sasaki M."/>
            <person name="Togashi T."/>
            <person name="Oyama M."/>
            <person name="Hata H."/>
            <person name="Watanabe M."/>
            <person name="Komatsu T."/>
            <person name="Mizushima-Sugano J."/>
            <person name="Satoh T."/>
            <person name="Shirai Y."/>
            <person name="Takahashi Y."/>
            <person name="Nakagawa K."/>
            <person name="Okumura K."/>
            <person name="Nagase T."/>
            <person name="Nomura N."/>
            <person name="Kikuchi H."/>
            <person name="Masuho Y."/>
            <person name="Yamashita R."/>
            <person name="Nakai K."/>
            <person name="Yada T."/>
            <person name="Nakamura Y."/>
            <person name="Ohara O."/>
            <person name="Isogai T."/>
            <person name="Sugano S."/>
        </authorList>
    </citation>
    <scope>NUCLEOTIDE SEQUENCE [LARGE SCALE MRNA] (ISOFORM 1)</scope>
</reference>
<reference key="11">
    <citation type="submission" date="2005-04" db="EMBL/GenBank/DDBJ databases">
        <authorList>
            <person name="Totoki Y."/>
            <person name="Toyoda A."/>
            <person name="Takeda T."/>
            <person name="Sakaki Y."/>
            <person name="Tanaka A."/>
            <person name="Yokoyama S."/>
        </authorList>
    </citation>
    <scope>NUCLEOTIDE SEQUENCE [LARGE SCALE MRNA] (ISOFORM 1)</scope>
</reference>
<reference key="12">
    <citation type="submission" date="2004-10" db="EMBL/GenBank/DDBJ databases">
        <authorList>
            <consortium name="NIEHS SNPs program"/>
        </authorList>
    </citation>
    <scope>NUCLEOTIDE SEQUENCE [GENOMIC DNA]</scope>
</reference>
<reference key="13">
    <citation type="journal article" date="2006" name="Nature">
        <title>DNA sequence of human chromosome 17 and analysis of rearrangement in the human lineage.</title>
        <authorList>
            <person name="Zody M.C."/>
            <person name="Garber M."/>
            <person name="Adams D.J."/>
            <person name="Sharpe T."/>
            <person name="Harrow J."/>
            <person name="Lupski J.R."/>
            <person name="Nicholson C."/>
            <person name="Searle S.M."/>
            <person name="Wilming L."/>
            <person name="Young S.K."/>
            <person name="Abouelleil A."/>
            <person name="Allen N.R."/>
            <person name="Bi W."/>
            <person name="Bloom T."/>
            <person name="Borowsky M.L."/>
            <person name="Bugalter B.E."/>
            <person name="Butler J."/>
            <person name="Chang J.L."/>
            <person name="Chen C.-K."/>
            <person name="Cook A."/>
            <person name="Corum B."/>
            <person name="Cuomo C.A."/>
            <person name="de Jong P.J."/>
            <person name="DeCaprio D."/>
            <person name="Dewar K."/>
            <person name="FitzGerald M."/>
            <person name="Gilbert J."/>
            <person name="Gibson R."/>
            <person name="Gnerre S."/>
            <person name="Goldstein S."/>
            <person name="Grafham D.V."/>
            <person name="Grocock R."/>
            <person name="Hafez N."/>
            <person name="Hagopian D.S."/>
            <person name="Hart E."/>
            <person name="Norman C.H."/>
            <person name="Humphray S."/>
            <person name="Jaffe D.B."/>
            <person name="Jones M."/>
            <person name="Kamal M."/>
            <person name="Khodiyar V.K."/>
            <person name="LaButti K."/>
            <person name="Laird G."/>
            <person name="Lehoczky J."/>
            <person name="Liu X."/>
            <person name="Lokyitsang T."/>
            <person name="Loveland J."/>
            <person name="Lui A."/>
            <person name="Macdonald P."/>
            <person name="Major J.E."/>
            <person name="Matthews L."/>
            <person name="Mauceli E."/>
            <person name="McCarroll S.A."/>
            <person name="Mihalev A.H."/>
            <person name="Mudge J."/>
            <person name="Nguyen C."/>
            <person name="Nicol R."/>
            <person name="O'Leary S.B."/>
            <person name="Osoegawa K."/>
            <person name="Schwartz D.C."/>
            <person name="Shaw-Smith C."/>
            <person name="Stankiewicz P."/>
            <person name="Steward C."/>
            <person name="Swarbreck D."/>
            <person name="Venkataraman V."/>
            <person name="Whittaker C.A."/>
            <person name="Yang X."/>
            <person name="Zimmer A.R."/>
            <person name="Bradley A."/>
            <person name="Hubbard T."/>
            <person name="Birren B.W."/>
            <person name="Rogers J."/>
            <person name="Lander E.S."/>
            <person name="Nusbaum C."/>
        </authorList>
    </citation>
    <scope>NUCLEOTIDE SEQUENCE [LARGE SCALE GENOMIC DNA]</scope>
    <scope>VARIANT GLU-129</scope>
</reference>
<reference key="14">
    <citation type="submission" date="2005-07" db="EMBL/GenBank/DDBJ databases">
        <authorList>
            <person name="Mural R.J."/>
            <person name="Istrail S."/>
            <person name="Sutton G.G."/>
            <person name="Florea L."/>
            <person name="Halpern A.L."/>
            <person name="Mobarry C.M."/>
            <person name="Lippert R."/>
            <person name="Walenz B."/>
            <person name="Shatkay H."/>
            <person name="Dew I."/>
            <person name="Miller J.R."/>
            <person name="Flanigan M.J."/>
            <person name="Edwards N.J."/>
            <person name="Bolanos R."/>
            <person name="Fasulo D."/>
            <person name="Halldorsson B.V."/>
            <person name="Hannenhalli S."/>
            <person name="Turner R."/>
            <person name="Yooseph S."/>
            <person name="Lu F."/>
            <person name="Nusskern D.R."/>
            <person name="Shue B.C."/>
            <person name="Zheng X.H."/>
            <person name="Zhong F."/>
            <person name="Delcher A.L."/>
            <person name="Huson D.H."/>
            <person name="Kravitz S.A."/>
            <person name="Mouchard L."/>
            <person name="Reinert K."/>
            <person name="Remington K.A."/>
            <person name="Clark A.G."/>
            <person name="Waterman M.S."/>
            <person name="Eichler E.E."/>
            <person name="Adams M.D."/>
            <person name="Hunkapiller M.W."/>
            <person name="Myers E.W."/>
            <person name="Venter J.C."/>
        </authorList>
    </citation>
    <scope>NUCLEOTIDE SEQUENCE [LARGE SCALE GENOMIC DNA]</scope>
</reference>
<reference key="15">
    <citation type="journal article" date="2004" name="Genome Res.">
        <title>The status, quality, and expansion of the NIH full-length cDNA project: the Mammalian Gene Collection (MGC).</title>
        <authorList>
            <consortium name="The MGC Project Team"/>
        </authorList>
    </citation>
    <scope>NUCLEOTIDE SEQUENCE [LARGE SCALE MRNA] (ISOFORM 1)</scope>
    <source>
        <tissue>Lung</tissue>
        <tissue>Mammary gland</tissue>
        <tissue>Muscle</tissue>
    </source>
</reference>
<reference key="16">
    <citation type="journal article" date="1998" name="Nature">
        <title>Control of apoptosis and mitotic spindle checkpoint by survivin.</title>
        <authorList>
            <person name="Li F."/>
            <person name="Ambrosini G."/>
            <person name="Chu E.Y."/>
            <person name="Plescia J."/>
            <person name="Tognin S."/>
            <person name="Marchisio P.C."/>
            <person name="Altieri D.C."/>
        </authorList>
    </citation>
    <scope>FUNCTION</scope>
</reference>
<reference key="17">
    <citation type="journal article" date="2000" name="Proc. Natl. Acad. Sci. U.S.A.">
        <title>Regulation of apoptosis at cell division by p34cdc2 phosphorylation of survivin.</title>
        <authorList>
            <person name="O'Connor D.S."/>
            <person name="Grossman D."/>
            <person name="Plescia J."/>
            <person name="Li F."/>
            <person name="Zhang H."/>
            <person name="Villa A."/>
            <person name="Tognin S."/>
            <person name="Marchisio P.C."/>
            <person name="Altieri D.C."/>
        </authorList>
    </citation>
    <scope>PHOSPHORYLATION AT THR-34</scope>
</reference>
<reference key="18">
    <citation type="journal article" date="2003" name="EMBO J.">
        <title>HBXIP functions as a cofactor of survivin in apoptosis suppression.</title>
        <authorList>
            <person name="Marusawa H."/>
            <person name="Matsuzawa S."/>
            <person name="Welsh K."/>
            <person name="Zou H."/>
            <person name="Armstrong R."/>
            <person name="Tamm I."/>
            <person name="Reed J.C."/>
        </authorList>
    </citation>
    <scope>FUNCTION IN APOPTOSIS SUPPRESSION</scope>
    <scope>INTERACTION WITH LAMTOR5/HBXIP</scope>
    <scope>MUTAGENESIS OF THR-34</scope>
    <scope>SUBCELLULAR LOCATION</scope>
</reference>
<reference key="19">
    <citation type="journal article" date="2004" name="J. Biol. Chem.">
        <title>Aurora-B phosphorylation in vitro identifies a residue of survivin that is essential for its localization and binding to inner centromere protein (INCENP) in vivo.</title>
        <authorList>
            <person name="Wheatley S.P."/>
            <person name="Henzing A.J."/>
            <person name="Dodson H."/>
            <person name="Khaled W."/>
            <person name="Earnshaw W.C."/>
        </authorList>
    </citation>
    <scope>INTERACTION WITH INCENP</scope>
    <scope>SUBCELLULAR LOCATION</scope>
    <scope>PHOSPHORYLATION AT THR-117</scope>
    <scope>MUTAGENESIS OF THR-117</scope>
</reference>
<reference key="20">
    <citation type="journal article" date="2004" name="J. Cell Biol.">
        <title>Borealin: a novel chromosomal passenger required for stability of the bipolar mitotic spindle.</title>
        <authorList>
            <person name="Gassmann R."/>
            <person name="Carvalho A."/>
            <person name="Henzing A.J."/>
            <person name="Ruchaud S."/>
            <person name="Hudson D.F."/>
            <person name="Honda R."/>
            <person name="Nigg E.A."/>
            <person name="Gerloff D.L."/>
            <person name="Earnshaw W.C."/>
        </authorList>
    </citation>
    <scope>INTERACTION WITH CDCA8</scope>
</reference>
<reference key="21">
    <citation type="journal article" date="2005" name="Cancer Res.">
        <title>cIAP1 Localizes to the nuclear compartment and modulates the cell cycle.</title>
        <authorList>
            <person name="Samuel T."/>
            <person name="Okada K."/>
            <person name="Hyer M."/>
            <person name="Welsh K."/>
            <person name="Zapata J.M."/>
            <person name="Reed J.C."/>
        </authorList>
    </citation>
    <scope>SUBCELLULAR LOCATION</scope>
    <scope>INTERACTION WITH BIRC2/C-IAP1</scope>
</reference>
<reference key="22">
    <citation type="journal article" date="2005" name="Int. Rev. Cytol.">
        <title>Survivin: a protein with dual roles in mitosis and apoptosis.</title>
        <authorList>
            <person name="Wheatley S.P."/>
            <person name="McNeish I.A."/>
        </authorList>
    </citation>
    <scope>REVIEW ON FUNCTION</scope>
</reference>
<reference key="23">
    <citation type="journal article" date="2005" name="Science">
        <title>Chromosome alignment and segregation regulated by ubiquitination of survivin.</title>
        <authorList>
            <person name="Vong Q.P."/>
            <person name="Cao K."/>
            <person name="Li H.Y."/>
            <person name="Iglesias P.A."/>
            <person name="Zheng Y."/>
        </authorList>
    </citation>
    <scope>FUNCTION</scope>
    <scope>INTERACTION WITH USP9X</scope>
    <scope>SUBCELLULAR LOCATION</scope>
    <scope>UBIQUITINATION</scope>
    <scope>MUTAGENESIS OF LYS-23; LYS-62; LYS-78 AND LYS-79</scope>
</reference>
<reference key="24">
    <citation type="journal article" date="2006" name="Biochem. Biophys. Res. Commun.">
        <title>Survivin mutant (Surv-DD70, 71AA) disrupts the interaction of Survivin with Aurora B and causes multinucleation in HeLa cells.</title>
        <authorList>
            <person name="Cao L."/>
            <person name="Yan X."/>
            <person name="Wu Y."/>
            <person name="Hu H."/>
            <person name="Li Q."/>
            <person name="Zhou T."/>
            <person name="Jiang S."/>
            <person name="Yu L."/>
        </authorList>
    </citation>
    <scope>MUTAGENESIS OF ASP-70; ASP-71 AND 70-ASP--ASP-71</scope>
</reference>
<reference key="25">
    <citation type="journal article" date="2006" name="EMBO Rep.">
        <title>Survivin mediates targeting of the chromosomal passenger complex to the centromere and midbody.</title>
        <authorList>
            <person name="Vader G."/>
            <person name="Kauw J.J.W."/>
            <person name="Medema R.H."/>
            <person name="Lens S.M.A."/>
        </authorList>
    </citation>
    <scope>INTERACTION WITH CDCA8</scope>
</reference>
<reference key="26">
    <citation type="journal article" date="2006" name="Exp. Cell Res.">
        <title>Borealin/Dasra B is a cell cycle-regulated chromosomal passenger protein and its nuclear accumulation is linked to poor prognosis for human gastric cancer.</title>
        <authorList>
            <person name="Chang J.-L."/>
            <person name="Chen T.-H."/>
            <person name="Wang C.-F."/>
            <person name="Chiang Y.-H."/>
            <person name="Huang Y.-L."/>
            <person name="Wong F.-H."/>
            <person name="Chou C.-K."/>
            <person name="Chen C.-M."/>
        </authorList>
    </citation>
    <scope>INTERACTION WITH CDCA8</scope>
</reference>
<reference key="27">
    <citation type="journal article" date="2006" name="Exp. Cell Res.">
        <title>EVI5 protein associates with the INCENP-aurora B kinase-survivin chromosomal passenger complex and is involved in the completion of cytokinesis.</title>
        <authorList>
            <person name="Faitar S.L."/>
            <person name="Sossey-Alaoui K."/>
            <person name="Ranalli T.A."/>
            <person name="Cowell J.K."/>
        </authorList>
    </citation>
    <scope>INTERACTION WITH EVI5</scope>
</reference>
<reference key="28">
    <citation type="journal article" date="2006" name="J. Biol. Chem.">
        <title>Molecular analysis of survivin isoforms: evidence that alternatively spliced variants do not play a role in mitosis.</title>
        <authorList>
            <person name="Noton E.A."/>
            <person name="Colnaghi R."/>
            <person name="Tate S."/>
            <person name="Starck C."/>
            <person name="Carvalho A."/>
            <person name="Ko Ferrigno P."/>
            <person name="Wheatley S.P."/>
        </authorList>
    </citation>
    <scope>FUNCTION</scope>
    <scope>INTERACTION WITH CDCA8</scope>
</reference>
<reference key="29">
    <citation type="journal article" date="2006" name="Mol. Biol. Cell">
        <title>Uncoupling the central spindle-associated function of the chromosomal passenger complex from its role at centromeres.</title>
        <authorList>
            <person name="Lens S.M.A."/>
            <person name="Rodriguez J.A."/>
            <person name="Vader G."/>
            <person name="Span S.W."/>
            <person name="Giaccone G."/>
            <person name="Medema R.H."/>
        </authorList>
    </citation>
    <scope>INTERACTION WITH CDCA8</scope>
</reference>
<reference key="30">
    <citation type="journal article" date="2008" name="Cell">
        <title>Final stages of cytokinesis and midbody ring formation are controlled by BRUCE.</title>
        <authorList>
            <person name="Pohl C."/>
            <person name="Jentsch S."/>
        </authorList>
    </citation>
    <scope>INTERACTION WITH BIRC6/BRUCE</scope>
</reference>
<reference key="31">
    <citation type="journal article" date="2008" name="J. Biol. Chem.">
        <title>Cartilage oligomeric matrix protein protects cells against death by elevating members of the IAP family of survival proteins.</title>
        <authorList>
            <person name="Gagarina V."/>
            <person name="Carlberg A.L."/>
            <person name="Pereira-Mouries L."/>
            <person name="Hall D.J."/>
        </authorList>
    </citation>
    <scope>INDUCTION</scope>
</reference>
<reference key="32">
    <citation type="journal article" date="2008" name="Mol. Cell">
        <title>Kinase-selective enrichment enables quantitative phosphoproteomics of the kinome across the cell cycle.</title>
        <authorList>
            <person name="Daub H."/>
            <person name="Olsen J.V."/>
            <person name="Bairlein M."/>
            <person name="Gnad F."/>
            <person name="Oppermann F.S."/>
            <person name="Korner R."/>
            <person name="Greff Z."/>
            <person name="Keri G."/>
            <person name="Stemmann O."/>
            <person name="Mann M."/>
        </authorList>
    </citation>
    <scope>PHOSPHORYLATION [LARGE SCALE ANALYSIS] AT THR-34</scope>
    <scope>IDENTIFICATION BY MASS SPECTROMETRY [LARGE SCALE ANALYSIS]</scope>
    <source>
        <tissue>Cervix carcinoma</tissue>
    </source>
</reference>
<reference key="33">
    <citation type="journal article" date="2008" name="Mol. Cell. Biol.">
        <title>A survivin-ran complex regulates spindle formation in tumor cells.</title>
        <authorList>
            <person name="Xia F."/>
            <person name="Canovas P.M."/>
            <person name="Guadagno T.M."/>
            <person name="Altieri D.C."/>
        </authorList>
    </citation>
    <scope>FUNCTION</scope>
    <scope>INTERACTION WITH RAN; AURKB AND CDCA8</scope>
    <scope>SUBCELLULAR LOCATION</scope>
    <scope>DEVELOPMENTAL STAGE</scope>
    <scope>MUTAGENESIS OF GLU-65</scope>
</reference>
<reference key="34">
    <citation type="journal article" date="2010" name="Cell Death Dis.">
        <title>An otoprotective role for the apoptosis inhibitor protein survivin.</title>
        <authorList>
            <person name="Knauer S.K."/>
            <person name="Heinrich U.R."/>
            <person name="Bier C."/>
            <person name="Habtemichael N."/>
            <person name="Docter D."/>
            <person name="Helling K."/>
            <person name="Mann W.J."/>
            <person name="Stauber R.H."/>
        </authorList>
    </citation>
    <scope>FUNCTION</scope>
    <scope>SUBCELLULAR LOCATION</scope>
    <scope>TISSUE SPECIFICITY</scope>
</reference>
<reference key="35">
    <citation type="journal article" date="2010" name="J. Biol. Chem.">
        <title>Acetylation directs survivin nuclear localization to repress STAT3 oncogenic activity.</title>
        <authorList>
            <person name="Wang H."/>
            <person name="Holloway M.P."/>
            <person name="Ma L."/>
            <person name="Cooper Z.A."/>
            <person name="Riolo M."/>
            <person name="Samkari A."/>
            <person name="Elenitoba-Johnson K.S."/>
            <person name="Chin Y.E."/>
            <person name="Altura R.A."/>
        </authorList>
    </citation>
    <scope>FUNCTION</scope>
    <scope>SUBCELLULAR LOCATION</scope>
    <scope>INTERACTION WITH STAT3 AND XPO1/CRM1</scope>
    <scope>ACETYLATION AT LYS-23; LYS-90; LYS-110; LYS-112; LYS-115; LYS-121 AND LYS-129</scope>
    <scope>MUTAGENESIS OF LYS-129</scope>
    <scope>CHARACTERIZATION OF VARIANT GLU-129</scope>
</reference>
<reference key="36">
    <citation type="journal article" date="2010" name="Mol. Cell. Neurosci.">
        <title>Expression analysis suggests a potential cytoprotective role of Birc5 in the inner ear.</title>
        <authorList>
            <person name="Habtemichael N."/>
            <person name="Heinrich U.R."/>
            <person name="Knauer S.K."/>
            <person name="Schmidtmann I."/>
            <person name="Bier C."/>
            <person name="Docter D."/>
            <person name="Brochhausen C."/>
            <person name="Helling K."/>
            <person name="Brieger J."/>
            <person name="Stauber R.H."/>
            <person name="Mann W.J."/>
        </authorList>
    </citation>
    <scope>FUNCTION</scope>
    <scope>SUBCELLULAR LOCATION</scope>
    <scope>TISSUE SPECIFICITY</scope>
</reference>
<reference key="37">
    <citation type="journal article" date="2010" name="Science">
        <title>Two histone marks establish the inner centromere and chromosome bi-orientation.</title>
        <authorList>
            <person name="Yamagishi Y."/>
            <person name="Honda T."/>
            <person name="Tanno Y."/>
            <person name="Watanabe Y."/>
        </authorList>
    </citation>
    <scope>FUNCTION</scope>
    <scope>HISTONE-BINDING</scope>
    <scope>MUTAGENESIS OF ARG-18; TRP-25; CYS-33; CYS-57 AND TRP-67</scope>
</reference>
<reference key="38">
    <citation type="journal article" date="2011" name="Cell Cycle">
        <title>Threonine 48 in the BIR domain of survivin is critical to its mitotic and anti-apoptotic activities and can be phosphorylated by CK2 in vitro.</title>
        <authorList>
            <person name="Barrett R.M."/>
            <person name="Colnaghi R."/>
            <person name="Wheatley S.P."/>
        </authorList>
    </citation>
    <scope>PHOSPHORYLATION AT THR-48</scope>
    <scope>MUTAGENESIS OF THR-48</scope>
</reference>
<reference key="39">
    <citation type="journal article" date="2011" name="Int. J. Oncol.">
        <title>PAR, a protein involved in the cell cycle, is functionally related to chromosomal passenger proteins.</title>
        <authorList>
            <person name="Platica M."/>
            <person name="Ionescu A."/>
            <person name="Ivan E."/>
            <person name="Holland J.F."/>
            <person name="Mandeli J."/>
            <person name="Platica O."/>
        </authorList>
    </citation>
    <scope>INTERACTION WITH JTB</scope>
</reference>
<reference key="40">
    <citation type="journal article" date="2011" name="J. Biol. Chem.">
        <title>Survivin monomer plays an essential role in apoptosis regulation.</title>
        <authorList>
            <person name="Pavlyukov M.S."/>
            <person name="Antipova N.V."/>
            <person name="Balashova M.V."/>
            <person name="Vinogradova T.V."/>
            <person name="Kopantzev E.P."/>
            <person name="Shakhparonov M.I."/>
        </authorList>
    </citation>
    <scope>FUNCTION</scope>
    <scope>SUBUNIT</scope>
    <scope>INTERACTION WITH XIAP/BIRC4 AND DIABLO/SMAC</scope>
</reference>
<reference key="41">
    <citation type="journal article" date="2014" name="Biochem. Biophys. Res. Commun.">
        <title>ALS2CR7 (CDK15) attenuates TRAIL induced apoptosis by inducing phosphorylation of survivin Thr34.</title>
        <authorList>
            <person name="Park M.H."/>
            <person name="Kim S.Y."/>
            <person name="Kim Y.J."/>
            <person name="Chung Y.H."/>
        </authorList>
    </citation>
    <scope>PHOSPHORYLATION AT THR-34 BY CDK15</scope>
</reference>
<reference key="42">
    <citation type="journal article" date="2014" name="Mol. Cell">
        <title>CUL9 mediates the functions of the 3M complex and ubiquitylates survivin to maintain genome integrity.</title>
        <authorList>
            <person name="Li Z."/>
            <person name="Pei X.H."/>
            <person name="Yan J."/>
            <person name="Yan F."/>
            <person name="Cappell K.M."/>
            <person name="Whitehurst A.W."/>
            <person name="Xiong Y."/>
        </authorList>
    </citation>
    <scope>UBIQUITINATION</scope>
</reference>
<reference key="43">
    <citation type="journal article" date="2015" name="J. Biol. Chem.">
        <title>The Proapoptotic F-box Protein Fbxl7 Regulates Mitochondrial Function by Mediating the Ubiquitylation and Proteasomal Degradation of Survivin.</title>
        <authorList>
            <person name="Liu Y."/>
            <person name="Lear T."/>
            <person name="Iannone O."/>
            <person name="Shiva S."/>
            <person name="Corey C."/>
            <person name="Rajbhandari S."/>
            <person name="Jerome J."/>
            <person name="Chen B.B."/>
            <person name="Mallampalli R.K."/>
        </authorList>
    </citation>
    <scope>FUNCTION</scope>
    <scope>INTERACTION WITH FBXL7</scope>
    <scope>MUTAGENESIS OF 90-LYS-LYS-91 AND GLU-126</scope>
</reference>
<reference key="44">
    <citation type="journal article" date="2016" name="PLoS ONE">
        <title>Aurora-C interactions with survivin and INCENP reveal shared and distinct features compared with Aurora-B chromosome passenger protein complex.</title>
        <authorList>
            <person name="Sasai K."/>
            <person name="Katayama H."/>
            <person name="Hawke D.H."/>
            <person name="Sen S."/>
        </authorList>
    </citation>
    <scope>SUBUNIT</scope>
    <scope>PHOSPHORYLATION AT SER-20</scope>
</reference>
<reference key="45">
    <citation type="journal article" date="2017" name="Oncogenesis">
        <title>Aurora kinase A regulates Survivin stability through targeting FBXL7 in gastric cancer drug resistance and prognosis.</title>
        <authorList>
            <person name="Kamran M."/>
            <person name="Long Z.J."/>
            <person name="Xu D."/>
            <person name="Lv S.S."/>
            <person name="Liu B."/>
            <person name="Wang C.L."/>
            <person name="Xu J."/>
            <person name="Lam E.W."/>
            <person name="Liu Q."/>
        </authorList>
    </citation>
    <scope>FUNCTION</scope>
    <scope>INTERACTION WITH FBXL7</scope>
</reference>
<reference key="46">
    <citation type="journal article" date="2017" name="Oncotarget">
        <title>Carcinoma-risk variant of EBNA1 deregulates Epstein-Barr Virus episomal latency.</title>
        <authorList>
            <person name="Dheekollu J."/>
            <person name="Malecka K."/>
            <person name="Wiedmer A."/>
            <person name="Delecluse H.J."/>
            <person name="Chiang A.K."/>
            <person name="Altieri D.C."/>
            <person name="Messick T.E."/>
            <person name="Lieberman P.M."/>
        </authorList>
    </citation>
    <scope>INTERACTION WITH EPSTEIN-BARR VIRUS EBNA1 (MICROBIAL INFECTION)</scope>
</reference>
<reference key="47">
    <citation type="journal article" date="2021" name="Biochem. Biophys. Res. Commun.">
        <title>Regulation of survivin protein stability by USP35 is evolutionarily conserved.</title>
        <authorList>
            <person name="Wang W."/>
            <person name="Lin H."/>
            <person name="Zheng E."/>
            <person name="Hou Z."/>
            <person name="Liu Y."/>
            <person name="Huang W."/>
            <person name="Chen D."/>
            <person name="Feng J."/>
            <person name="Li J."/>
            <person name="Li L."/>
        </authorList>
    </citation>
    <scope>DEUBIQUITINATION BY USP35 AND USP38</scope>
</reference>
<reference key="48">
    <citation type="journal article" date="2000" name="Mol. Cell">
        <title>Crystal structure of human survivin reveals a bow tie-shaped dimer with two unusual alpha-helical extensions.</title>
        <authorList>
            <person name="Chantalat L."/>
            <person name="Skoufias D.A."/>
            <person name="Kleman J.P."/>
            <person name="Jung B."/>
            <person name="Dideberg O."/>
            <person name="Margolis R.L."/>
        </authorList>
    </citation>
    <scope>X-RAY CRYSTALLOGRAPHY (2.71 ANGSTROMS) OF ISOFORM 1</scope>
</reference>
<reference key="49">
    <citation type="journal article" date="2000" name="Nat. Struct. Biol.">
        <title>Structure of the human anti-apoptotic protein survivin reveals a dimeric arrangement.</title>
        <authorList>
            <person name="Verdecia M.A."/>
            <person name="Huang H."/>
            <person name="Dutil E."/>
            <person name="Kaiser D.A."/>
            <person name="Hunter T."/>
            <person name="Noel J.P."/>
        </authorList>
    </citation>
    <scope>X-RAY CRYSTALLOGRAPHY (2.58 ANGSTROMS) OF ISOFORM 1</scope>
</reference>
<reference key="50">
    <citation type="journal article" date="2007" name="Cell">
        <title>Structure of a Survivin-Borealin-INCENP core complex reveals how chromosomal passengers travel together.</title>
        <authorList>
            <person name="Jeyaprakash A.A."/>
            <person name="Klein U.R."/>
            <person name="Lindner D."/>
            <person name="Ebert J."/>
            <person name="Nigg E.A."/>
            <person name="Conti E."/>
        </authorList>
    </citation>
    <scope>X-RAY CRYSTALLOGRAPHY (1.8 ANGSTROMS) IN COMPLEX WITH ZINC IONS</scope>
    <scope>SUBUNIT</scope>
    <scope>INTERACTION WITH CDCA8 AND INCENP</scope>
</reference>
<reference key="51">
    <citation type="journal article" date="2009" name="Biochemistry">
        <title>Phosphorylation of a borealin dimerization domain is required for proper chromosome segregation.</title>
        <authorList>
            <person name="Bourhis E."/>
            <person name="Lingel A."/>
            <person name="Phung Q."/>
            <person name="Fairbrother W.J."/>
            <person name="Cochran A.G."/>
        </authorList>
    </citation>
    <scope>X-RAY CRYSTALLOGRAPHY (2.4 ANGSTROMS)</scope>
</reference>
<gene>
    <name type="primary">BIRC5</name>
    <name type="synonym">API4</name>
    <name type="synonym">IAP4</name>
</gene>
<accession>O15392</accession>
<accession>A2SUH6</accession>
<accession>B2R4R1</accession>
<accession>Q2I3N8</accession>
<accession>Q4VGX0</accession>
<accession>Q53F61</accession>
<accession>Q5MGC6</accession>
<accession>Q6FHL2</accession>
<accession>Q75SP2</accession>
<accession>Q9P2W8</accession>
<sequence length="142" mass="16389">MGAPTLPPAWQPFLKDHRISTFKNWPFLEGCACTPERMAEAGFIHCPTENEPDLAQCFFCFKELEGWEPDDDPIEEHKKHSSGCAFLSVKKQFEELTLGEFLKLDRERAKNKIAKETNNKKKEFEETAKKVRRAIEQLAAMD</sequence>
<feature type="chain" id="PRO_0000122356" description="Baculoviral IAP repeat-containing protein 5">
    <location>
        <begin position="1"/>
        <end position="142"/>
    </location>
</feature>
<feature type="repeat" description="BIR">
    <location>
        <begin position="18"/>
        <end position="88"/>
    </location>
</feature>
<feature type="binding site" evidence="19 45">
    <location>
        <position position="57"/>
    </location>
    <ligand>
        <name>Zn(2+)</name>
        <dbReference type="ChEBI" id="CHEBI:29105"/>
    </ligand>
</feature>
<feature type="binding site" evidence="19 45">
    <location>
        <position position="60"/>
    </location>
    <ligand>
        <name>Zn(2+)</name>
        <dbReference type="ChEBI" id="CHEBI:29105"/>
    </ligand>
</feature>
<feature type="binding site" evidence="19 45">
    <location>
        <position position="77"/>
    </location>
    <ligand>
        <name>Zn(2+)</name>
        <dbReference type="ChEBI" id="CHEBI:29105"/>
    </ligand>
</feature>
<feature type="binding site" evidence="19 45">
    <location>
        <position position="84"/>
    </location>
    <ligand>
        <name>Zn(2+)</name>
        <dbReference type="ChEBI" id="CHEBI:29105"/>
    </ligand>
</feature>
<feature type="site" description="Interaction with FBXL7" evidence="32">
    <location>
        <position position="126"/>
    </location>
</feature>
<feature type="modified residue" description="Phosphoserine; by AURKC" evidence="33">
    <location>
        <position position="20"/>
    </location>
</feature>
<feature type="modified residue" description="N6-acetyllysine" evidence="24">
    <location>
        <position position="23"/>
    </location>
</feature>
<feature type="modified residue" description="Phosphothreonine; by CDK1 and CDK15" evidence="3 31 46">
    <location>
        <position position="34"/>
    </location>
</feature>
<feature type="modified residue" description="Phosphothreonine; by CK2; in vitro" evidence="27">
    <location>
        <position position="48"/>
    </location>
</feature>
<feature type="modified residue" description="N6-acetyllysine" evidence="24">
    <location>
        <position position="90"/>
    </location>
</feature>
<feature type="modified residue" description="N6-acetyllysine" evidence="24">
    <location>
        <position position="110"/>
    </location>
</feature>
<feature type="modified residue" description="N6-acetyllysine" evidence="24">
    <location>
        <position position="112"/>
    </location>
</feature>
<feature type="modified residue" description="N6-acetyllysine" evidence="24">
    <location>
        <position position="115"/>
    </location>
</feature>
<feature type="modified residue" description="Phosphothreonine; by AURKB" evidence="6">
    <location>
        <position position="117"/>
    </location>
</feature>
<feature type="modified residue" description="N6-acetyllysine" evidence="24">
    <location>
        <position position="121"/>
    </location>
</feature>
<feature type="modified residue" description="N6-acetyllysine" evidence="24">
    <location>
        <position position="129"/>
    </location>
</feature>
<feature type="splice variant" id="VSP_020338" description="In isoform 3." evidence="38">
    <original>IEEHKKHSSGCAFLSVKKQFEELTLGEFLKLDRERAKNKIAKETNNKKKEFEETAKKVRRAIEQLAAMD</original>
    <variation>MQRKPTIRRKNLRKLRRKCAVPSSSWLPWIEASGRSCLVPEWLHHFQGLFPGATSLPVGPLAMS</variation>
    <location>
        <begin position="74"/>
        <end position="142"/>
    </location>
</feature>
<feature type="splice variant" id="VSP_020339" description="In isoform 6." evidence="43">
    <original>IEEHKKHSSGCAFLSVKKQFEELTLGEFLKLDRERAKNKIAKETNNKKKEFEETAKKVRRAIEQLAAMD</original>
    <variation>MRELC</variation>
    <location>
        <begin position="74"/>
        <end position="142"/>
    </location>
</feature>
<feature type="splice variant" id="VSP_020340" description="In isoform 7." evidence="42">
    <original>IEEHKKHSSGCAFLSVKKQFEELTLGEFLKLDRERAKNKIAKETNNKKKEFEETAKKVRRAIEQLAAMD</original>
    <variation>M</variation>
    <location>
        <begin position="74"/>
        <end position="142"/>
    </location>
</feature>
<feature type="splice variant" id="VSP_002454" description="In isoform 2." evidence="38 41">
    <original>I</original>
    <variation>IGPGTVAYACNTSTLGGRGGRITR</variation>
    <location>
        <position position="74"/>
    </location>
</feature>
<feature type="splice variant" id="VSP_020341" description="In isoform 5." evidence="40">
    <original>DRERAKNKIAKETNNKKKEFEETAKKVRRAIEQLAAMD</original>
    <variation>VRETLPPPRSFIR</variation>
    <location>
        <begin position="105"/>
        <end position="142"/>
    </location>
</feature>
<feature type="splice variant" id="VSP_020342" description="In isoform 4." evidence="39">
    <original>AKETNNKKKEFEETAKKVRRAIEQLAAMD</original>
    <variation>ERALLAE</variation>
    <location>
        <begin position="114"/>
        <end position="142"/>
    </location>
</feature>
<feature type="sequence variant" id="VAR_021071" description="Loss of acetylation; localization primarily within the cytoplasm; increased likelihood of existing as monomer; stronger binding to XPO1/CRM1; dbSNP:rs2071214." evidence="16 24">
    <original>K</original>
    <variation>E</variation>
    <location>
        <position position="129"/>
    </location>
</feature>
<feature type="mutagenesis site" description="Disrupts interaction with histone H3pT3, no effect on interaction with INCENP." evidence="25">
    <original>R</original>
    <variation>A</variation>
    <location>
        <position position="18"/>
    </location>
</feature>
<feature type="mutagenesis site" description="Increases ubiquitination and blocks dissociation from centromeres; when associated with R-62; R-78 and R-79." evidence="12">
    <original>K</original>
    <variation>R</variation>
    <location>
        <position position="23"/>
    </location>
</feature>
<feature type="mutagenesis site" description="Disrupts interaction with histone H3pT3, no effect on interaction with INCENP." evidence="25">
    <original>W</original>
    <variation>A</variation>
    <location>
        <position position="25"/>
    </location>
</feature>
<feature type="mutagenesis site" description="Disrupts interaction with histone H3pT3, no effect on interaction with INCENP." evidence="25">
    <original>C</original>
    <variation>R</variation>
    <location>
        <position position="33"/>
    </location>
</feature>
<feature type="mutagenesis site" description="Loss of LAMTOR5 binding." evidence="5">
    <original>T</original>
    <variation>A</variation>
    <location>
        <position position="34"/>
    </location>
</feature>
<feature type="mutagenesis site" description="Higher affinity for LAMTOR5 binding." evidence="5">
    <original>T</original>
    <variation>E</variation>
    <location>
        <position position="34"/>
    </location>
</feature>
<feature type="mutagenesis site" description="Localizes normally during mitosis but cannot support cell proliferation. Increased affinity for CDCA8/borealin." evidence="27">
    <original>T</original>
    <variation>A</variation>
    <variation>E</variation>
    <location>
        <position position="48"/>
    </location>
</feature>
<feature type="mutagenesis site" description="Disrupts interaction with histone H3pT3, no effect on interaction with INCENP." evidence="25">
    <original>C</original>
    <variation>A</variation>
    <location>
        <position position="57"/>
    </location>
</feature>
<feature type="mutagenesis site" description="Increases ubiquitination and blocks dissociation from centromeres; when associated with R-23; R-78 and R-79." evidence="12">
    <original>K</original>
    <variation>R</variation>
    <location>
        <position position="62"/>
    </location>
</feature>
<feature type="mutagenesis site" description="Almost abolishes RAN-binding. Does not disrupt binding to AURKB or CDCA8. Disrupts mitotic spindle assembly. Does not disrupt nuclear export." evidence="22">
    <original>E</original>
    <variation>A</variation>
    <location>
        <position position="65"/>
    </location>
</feature>
<feature type="mutagenesis site" description="Disrupts interaction with histone H3pT3, no effect on interaction with INCENP." evidence="25">
    <original>W</original>
    <variation>A</variation>
    <location>
        <position position="67"/>
    </location>
</feature>
<feature type="mutagenesis site" description="No change. Loss of interaction with AURKB; when associated with A-71." evidence="17">
    <original>D</original>
    <variation>A</variation>
    <location>
        <position position="70"/>
    </location>
</feature>
<feature type="mutagenesis site" description="No change. Loss of interaction with AURKB; when associated with A-70." evidence="17">
    <original>D</original>
    <variation>A</variation>
    <location>
        <position position="71"/>
    </location>
</feature>
<feature type="mutagenesis site" description="Increases ubiquitination and blocks dissociation from centromeres; when associated with R-23; R-62 and R-79." evidence="12">
    <original>K</original>
    <variation>R</variation>
    <location>
        <position position="78"/>
    </location>
</feature>
<feature type="mutagenesis site" description="Increases ubiquitination and blocks dissociation from centromeres; when associated with R-23; R-62 and R-78." evidence="12">
    <original>K</original>
    <variation>R</variation>
    <location>
        <position position="79"/>
    </location>
</feature>
<feature type="mutagenesis site" description="Loss of cytoprotection.">
    <original>C</original>
    <variation>A</variation>
    <location>
        <position position="84"/>
    </location>
</feature>
<feature type="mutagenesis site" description="Loss of FBXL7 mediated polyubiquitination." evidence="32">
    <original>KK</original>
    <variation>RR</variation>
    <location>
        <begin position="90"/>
        <end position="91"/>
    </location>
</feature>
<feature type="mutagenesis site" description="Prevents phosphorylation by AURKB. Still able to localize correctly but prevents interaction with INCENP." evidence="6">
    <original>T</original>
    <variation>A</variation>
    <location>
        <position position="117"/>
    </location>
</feature>
<feature type="mutagenesis site" description="Mimics phosphorylation. Disrupts subcellular localization during mitosis and prevents interaction with INCENP." evidence="6">
    <original>T</original>
    <variation>E</variation>
    <location>
        <position position="117"/>
    </location>
</feature>
<feature type="mutagenesis site" description="Loss of FBXL7 binding." evidence="32">
    <original>E</original>
    <variation>A</variation>
    <location>
        <position position="126"/>
    </location>
</feature>
<feature type="mutagenesis site" description="Mimics acetylation. Localization primarily within the nucleus." evidence="24">
    <original>K</original>
    <variation>A</variation>
    <variation>Q</variation>
    <location>
        <position position="129"/>
    </location>
</feature>
<feature type="mutagenesis site" description="Loss of acetylation. Localization primarily within the cytoplasm." evidence="24">
    <original>K</original>
    <variation>R</variation>
    <location>
        <position position="129"/>
    </location>
</feature>
<feature type="sequence conflict" description="In Ref. 5; AAW22624." evidence="44" ref="5">
    <original>CF</original>
    <variation>WV</variation>
    <location>
        <begin position="57"/>
        <end position="58"/>
    </location>
</feature>
<feature type="sequence conflict" description="In Ref. 11; BAD97148." evidence="44" ref="11">
    <original>F</original>
    <variation>L</variation>
    <location>
        <position position="58"/>
    </location>
</feature>
<feature type="sequence conflict" description="In Ref. 9; CAG46540." evidence="44" ref="9">
    <original>A</original>
    <variation>V</variation>
    <location>
        <position position="128"/>
    </location>
</feature>
<feature type="turn" evidence="48">
    <location>
        <begin position="8"/>
        <end position="10"/>
    </location>
</feature>
<feature type="helix" evidence="48">
    <location>
        <begin position="11"/>
        <end position="13"/>
    </location>
</feature>
<feature type="helix" evidence="48">
    <location>
        <begin position="15"/>
        <end position="20"/>
    </location>
</feature>
<feature type="strand" evidence="50">
    <location>
        <begin position="29"/>
        <end position="32"/>
    </location>
</feature>
<feature type="helix" evidence="48">
    <location>
        <begin position="35"/>
        <end position="40"/>
    </location>
</feature>
<feature type="strand" evidence="48">
    <location>
        <begin position="43"/>
        <end position="45"/>
    </location>
</feature>
<feature type="strand" evidence="49">
    <location>
        <begin position="49"/>
        <end position="51"/>
    </location>
</feature>
<feature type="strand" evidence="48">
    <location>
        <begin position="55"/>
        <end position="57"/>
    </location>
</feature>
<feature type="turn" evidence="48">
    <location>
        <begin position="58"/>
        <end position="60"/>
    </location>
</feature>
<feature type="strand" evidence="50">
    <location>
        <begin position="63"/>
        <end position="65"/>
    </location>
</feature>
<feature type="helix" evidence="48">
    <location>
        <begin position="73"/>
        <end position="80"/>
    </location>
</feature>
<feature type="turn" evidence="47">
    <location>
        <begin position="81"/>
        <end position="83"/>
    </location>
</feature>
<feature type="helix" evidence="48">
    <location>
        <begin position="85"/>
        <end position="88"/>
    </location>
</feature>
<feature type="helix" evidence="48">
    <location>
        <begin position="93"/>
        <end position="95"/>
    </location>
</feature>
<feature type="helix" evidence="48">
    <location>
        <begin position="98"/>
        <end position="139"/>
    </location>
</feature>
<protein>
    <recommendedName>
        <fullName>Baculoviral IAP repeat-containing protein 5</fullName>
    </recommendedName>
    <alternativeName>
        <fullName>Apoptosis inhibitor 4</fullName>
    </alternativeName>
    <alternativeName>
        <fullName>Apoptosis inhibitor survivin</fullName>
    </alternativeName>
</protein>
<organism>
    <name type="scientific">Homo sapiens</name>
    <name type="common">Human</name>
    <dbReference type="NCBI Taxonomy" id="9606"/>
    <lineage>
        <taxon>Eukaryota</taxon>
        <taxon>Metazoa</taxon>
        <taxon>Chordata</taxon>
        <taxon>Craniata</taxon>
        <taxon>Vertebrata</taxon>
        <taxon>Euteleostomi</taxon>
        <taxon>Mammalia</taxon>
        <taxon>Eutheria</taxon>
        <taxon>Euarchontoglires</taxon>
        <taxon>Primates</taxon>
        <taxon>Haplorrhini</taxon>
        <taxon>Catarrhini</taxon>
        <taxon>Hominidae</taxon>
        <taxon>Homo</taxon>
    </lineage>
</organism>